<name>U520_HUMAN</name>
<accession>O75643</accession>
<accession>O94884</accession>
<accession>Q6NZY0</accession>
<accession>Q6PX59</accession>
<accession>Q8NBE6</accession>
<accession>Q96IF2</accession>
<accession>Q9H7S0</accession>
<protein>
    <recommendedName>
        <fullName>U5 small nuclear ribonucleoprotein 200 kDa helicase</fullName>
        <ecNumber evidence="14 28">3.6.4.13</ecNumber>
    </recommendedName>
    <alternativeName>
        <fullName>Activating signal cointegrator 1 complex subunit 3-like 1</fullName>
    </alternativeName>
    <alternativeName>
        <fullName>BRR2 homolog</fullName>
    </alternativeName>
    <alternativeName>
        <fullName>U5 snRNP-specific 200 kDa protein</fullName>
        <shortName>U5-200KD</shortName>
    </alternativeName>
</protein>
<proteinExistence type="evidence at protein level"/>
<organism>
    <name type="scientific">Homo sapiens</name>
    <name type="common">Human</name>
    <dbReference type="NCBI Taxonomy" id="9606"/>
    <lineage>
        <taxon>Eukaryota</taxon>
        <taxon>Metazoa</taxon>
        <taxon>Chordata</taxon>
        <taxon>Craniata</taxon>
        <taxon>Vertebrata</taxon>
        <taxon>Euteleostomi</taxon>
        <taxon>Mammalia</taxon>
        <taxon>Eutheria</taxon>
        <taxon>Euarchontoglires</taxon>
        <taxon>Primates</taxon>
        <taxon>Haplorrhini</taxon>
        <taxon>Catarrhini</taxon>
        <taxon>Hominidae</taxon>
        <taxon>Homo</taxon>
    </lineage>
</organism>
<keyword id="KW-0002">3D-structure</keyword>
<keyword id="KW-0007">Acetylation</keyword>
<keyword id="KW-0025">Alternative splicing</keyword>
<keyword id="KW-0067">ATP-binding</keyword>
<keyword id="KW-0175">Coiled coil</keyword>
<keyword id="KW-0903">Direct protein sequencing</keyword>
<keyword id="KW-0225">Disease variant</keyword>
<keyword id="KW-0347">Helicase</keyword>
<keyword id="KW-0378">Hydrolase</keyword>
<keyword id="KW-1017">Isopeptide bond</keyword>
<keyword id="KW-0507">mRNA processing</keyword>
<keyword id="KW-0508">mRNA splicing</keyword>
<keyword id="KW-0547">Nucleotide-binding</keyword>
<keyword id="KW-0539">Nucleus</keyword>
<keyword id="KW-0597">Phosphoprotein</keyword>
<keyword id="KW-1267">Proteomics identification</keyword>
<keyword id="KW-1185">Reference proteome</keyword>
<keyword id="KW-0677">Repeat</keyword>
<keyword id="KW-0682">Retinitis pigmentosa</keyword>
<keyword id="KW-0747">Spliceosome</keyword>
<keyword id="KW-0832">Ubl conjugation</keyword>
<evidence type="ECO:0000250" key="1">
    <source>
        <dbReference type="UniProtKB" id="F1LNJ2"/>
    </source>
</evidence>
<evidence type="ECO:0000250" key="2">
    <source>
        <dbReference type="UniProtKB" id="Q6P4T2"/>
    </source>
</evidence>
<evidence type="ECO:0000255" key="3"/>
<evidence type="ECO:0000255" key="4">
    <source>
        <dbReference type="PROSITE-ProRule" id="PRU00541"/>
    </source>
</evidence>
<evidence type="ECO:0000255" key="5">
    <source>
        <dbReference type="PROSITE-ProRule" id="PRU00542"/>
    </source>
</evidence>
<evidence type="ECO:0000256" key="6">
    <source>
        <dbReference type="SAM" id="MobiDB-lite"/>
    </source>
</evidence>
<evidence type="ECO:0000269" key="7">
    <source>
    </source>
</evidence>
<evidence type="ECO:0000269" key="8">
    <source>
    </source>
</evidence>
<evidence type="ECO:0000269" key="9">
    <source>
    </source>
</evidence>
<evidence type="ECO:0000269" key="10">
    <source>
    </source>
</evidence>
<evidence type="ECO:0000269" key="11">
    <source>
    </source>
</evidence>
<evidence type="ECO:0000269" key="12">
    <source>
    </source>
</evidence>
<evidence type="ECO:0000269" key="13">
    <source>
    </source>
</evidence>
<evidence type="ECO:0000269" key="14">
    <source>
    </source>
</evidence>
<evidence type="ECO:0000269" key="15">
    <source>
    </source>
</evidence>
<evidence type="ECO:0000269" key="16">
    <source>
    </source>
</evidence>
<evidence type="ECO:0000269" key="17">
    <source>
    </source>
</evidence>
<evidence type="ECO:0000269" key="18">
    <source>
    </source>
</evidence>
<evidence type="ECO:0000269" key="19">
    <source>
    </source>
</evidence>
<evidence type="ECO:0000269" key="20">
    <source>
    </source>
</evidence>
<evidence type="ECO:0000269" key="21">
    <source>
    </source>
</evidence>
<evidence type="ECO:0000269" key="22">
    <source>
    </source>
</evidence>
<evidence type="ECO:0000269" key="23">
    <source>
    </source>
</evidence>
<evidence type="ECO:0000269" key="24">
    <source>
    </source>
</evidence>
<evidence type="ECO:0000269" key="25">
    <source>
    </source>
</evidence>
<evidence type="ECO:0000269" key="26">
    <source>
    </source>
</evidence>
<evidence type="ECO:0000269" key="27">
    <source>
    </source>
</evidence>
<evidence type="ECO:0000269" key="28">
    <source>
    </source>
</evidence>
<evidence type="ECO:0000269" key="29">
    <source>
    </source>
</evidence>
<evidence type="ECO:0000269" key="30">
    <source>
    </source>
</evidence>
<evidence type="ECO:0000303" key="31">
    <source>
    </source>
</evidence>
<evidence type="ECO:0000303" key="32">
    <source>
    </source>
</evidence>
<evidence type="ECO:0000305" key="33"/>
<evidence type="ECO:0000305" key="34">
    <source>
    </source>
</evidence>
<evidence type="ECO:0007744" key="35">
    <source>
        <dbReference type="PDB" id="3JCR"/>
    </source>
</evidence>
<evidence type="ECO:0007744" key="36">
    <source>
        <dbReference type="PDB" id="4F93"/>
    </source>
</evidence>
<evidence type="ECO:0007744" key="37">
    <source>
        <dbReference type="PDB" id="5O9Z"/>
    </source>
</evidence>
<evidence type="ECO:0007744" key="38">
    <source>
        <dbReference type="PDB" id="5XJC"/>
    </source>
</evidence>
<evidence type="ECO:0007744" key="39">
    <source>
        <dbReference type="PDB" id="5YZG"/>
    </source>
</evidence>
<evidence type="ECO:0007744" key="40">
    <source>
        <dbReference type="PDB" id="5Z56"/>
    </source>
</evidence>
<evidence type="ECO:0007744" key="41">
    <source>
        <dbReference type="PDB" id="5Z57"/>
    </source>
</evidence>
<evidence type="ECO:0007744" key="42">
    <source>
        <dbReference type="PDB" id="5Z58"/>
    </source>
</evidence>
<evidence type="ECO:0007744" key="43">
    <source>
        <dbReference type="PDB" id="6AH0"/>
    </source>
</evidence>
<evidence type="ECO:0007744" key="44">
    <source>
        <dbReference type="PDB" id="6FF7"/>
    </source>
</evidence>
<evidence type="ECO:0007744" key="45">
    <source>
        <dbReference type="PDB" id="6ICZ"/>
    </source>
</evidence>
<evidence type="ECO:0007744" key="46">
    <source>
        <dbReference type="PDB" id="6QDV"/>
    </source>
</evidence>
<evidence type="ECO:0007744" key="47">
    <source>
        <dbReference type="PDB" id="7DVQ"/>
    </source>
</evidence>
<evidence type="ECO:0007744" key="48">
    <source>
        <dbReference type="PDB" id="7OS1"/>
    </source>
</evidence>
<evidence type="ECO:0007744" key="49">
    <source>
        <dbReference type="PDB" id="7OS2"/>
    </source>
</evidence>
<evidence type="ECO:0007744" key="50">
    <source>
        <dbReference type="PDB" id="7PX3"/>
    </source>
</evidence>
<evidence type="ECO:0007744" key="51">
    <source>
    </source>
</evidence>
<evidence type="ECO:0007744" key="52">
    <source>
    </source>
</evidence>
<evidence type="ECO:0007744" key="53">
    <source>
    </source>
</evidence>
<evidence type="ECO:0007744" key="54">
    <source>
    </source>
</evidence>
<evidence type="ECO:0007744" key="55">
    <source>
    </source>
</evidence>
<evidence type="ECO:0007744" key="56">
    <source>
    </source>
</evidence>
<evidence type="ECO:0007744" key="57">
    <source>
    </source>
</evidence>
<evidence type="ECO:0007744" key="58">
    <source>
    </source>
</evidence>
<evidence type="ECO:0007744" key="59">
    <source>
    </source>
</evidence>
<evidence type="ECO:0007744" key="60">
    <source>
    </source>
</evidence>
<evidence type="ECO:0007744" key="61">
    <source>
    </source>
</evidence>
<evidence type="ECO:0007744" key="62">
    <source>
    </source>
</evidence>
<evidence type="ECO:0007829" key="63">
    <source>
        <dbReference type="PDB" id="2Q0Z"/>
    </source>
</evidence>
<evidence type="ECO:0007829" key="64">
    <source>
        <dbReference type="PDB" id="4F92"/>
    </source>
</evidence>
<evidence type="ECO:0007829" key="65">
    <source>
        <dbReference type="PDB" id="4F93"/>
    </source>
</evidence>
<evidence type="ECO:0007829" key="66">
    <source>
        <dbReference type="PDB" id="6S8O"/>
    </source>
</evidence>
<evidence type="ECO:0007829" key="67">
    <source>
        <dbReference type="PDB" id="6S8Q"/>
    </source>
</evidence>
<evidence type="ECO:0007829" key="68">
    <source>
        <dbReference type="PDB" id="6S9I"/>
    </source>
</evidence>
<evidence type="ECO:0007829" key="69">
    <source>
        <dbReference type="PDB" id="7BDI"/>
    </source>
</evidence>
<evidence type="ECO:0007829" key="70">
    <source>
        <dbReference type="PDB" id="7BDJ"/>
    </source>
</evidence>
<evidence type="ECO:0007829" key="71">
    <source>
        <dbReference type="PDB" id="7BDK"/>
    </source>
</evidence>
<evidence type="ECO:0007829" key="72">
    <source>
        <dbReference type="PDB" id="7BDL"/>
    </source>
</evidence>
<evidence type="ECO:0007829" key="73">
    <source>
        <dbReference type="PDB" id="7DVQ"/>
    </source>
</evidence>
<evidence type="ECO:0007829" key="74">
    <source>
        <dbReference type="PDB" id="7OS2"/>
    </source>
</evidence>
<evidence type="ECO:0007829" key="75">
    <source>
        <dbReference type="PDB" id="8BC8"/>
    </source>
</evidence>
<evidence type="ECO:0007829" key="76">
    <source>
        <dbReference type="PDB" id="8BC9"/>
    </source>
</evidence>
<evidence type="ECO:0007829" key="77">
    <source>
        <dbReference type="PDB" id="8BCB"/>
    </source>
</evidence>
<evidence type="ECO:0007829" key="78">
    <source>
        <dbReference type="PDB" id="8BCC"/>
    </source>
</evidence>
<evidence type="ECO:0007829" key="79">
    <source>
        <dbReference type="PDB" id="8BCE"/>
    </source>
</evidence>
<evidence type="ECO:0007829" key="80">
    <source>
        <dbReference type="PDB" id="8BCH"/>
    </source>
</evidence>
<evidence type="ECO:0007829" key="81">
    <source>
        <dbReference type="PDB" id="8RC0"/>
    </source>
</evidence>
<sequence>MADVTARSLQYEYKANSNLVLQADRSLIDRTRRDEPTGEVLSLVGKLEGTRMGDKAQRTKPQMQEERRAKRRKRDEDRHDINKMKGYTLLSEGIDEMVGIIYKPKTKETRETYEVLLSFIQAALGDQPRDILCGAADEVLAVLKNEKLRDKERRKEIDLLLGQTDDTRYHVLVNLGKKITDYGGDKEIQNMDDNIDETYGVNVQFESDEEEGDEDVYGEVREEASDDDMEGDEAVVRCTLSANLVASGELMSSKKKDLHPRDIDAFWLQRQLSRFYDDAIVSQKKADEVLEILKTASDDRECENQLVLLLGFNTFDFIKVLRQHRMMILYCTLLASAQSEAEKERIMGKMEADPELSKFLYQLHETEKEDLIREERSRRERVRQSRMDTDLETMDLDQGGEALAPRQVLDLEDLVFTQGSHFMANKRCQLPDGSFRRQRKGYEEVHVPALKPKPFGSEEQLLPVEKLPKYAQAGFEGFKTLNRIQSKLYRAALETDENLLLCAPTGAGKTNVALMCMLREIGKHINMDGTINVDDFKIIYIAPMRSLVQEMVGSFGKRLATYGITVAELTGDHQLCKEEISATQIIVCTPEKWDIITRKGGERTYTQLVRLIILDEIHLLHDDRGPVLEALVARAIRNIEMTQEDVRLIGLSATLPNYEDVATFLRVDPAKGLFYFDNSFRPVPLEQTYVGITEKKAIKRFQIMNEIVYEKIMEHAGKNQVLVFVHSRKETGKTARAIRDMCLEKDTLGLFLREGSASTEVLRTEAEQCKNLELKDLLPYGFAIHHAGMTRVDRTLVEDLFADKHIQVLVSTATLAWGVNLPAHTVIIKGTQVYSPEKGRWTELGALDILQMLGRAGRPQYDTKGEGILITSHGELQYYLSLLNQQLPIESQMVSKLPDMLNAEIVLGNVQNAKDAVNWLGYAYLYIRMLRSPTLYGISHDDLKGDPLLDQRRLDLVHTAALMLDKNNLVKYDKKTGNFQVTELGRIASHYYITNDTVQTYNQLLKPTLSEIELFRVFSLSSEFKNITVREEEKLELQKLLERVPIPVKESIEEPSAKINVLLQAFISQLKLEGFALMADMVYVTQSAGRLMRAIFEIVLNRGWAQLTDKTLNLCKMIDKRMWQSMCPLRQFRKLPEEVVKKIEKKNFPFERLYDLNHNEIGELIRMPKMGKTIHKYVHLFPKLELSVHLQPITRSTLKVELTITPDFQWDEKVHGSSEAFWILVEDVDSEVILHHEYFLLKAKYAQDEHLITFFVPVFEPLPPQYFIRVVSDRWLSCETQLPVSFRHLILPEKYPPPTELLDLQPLPVSALRNSAFESLYQDKFPFFNPIQTQVFNTVYNSDDNVFVGAPTGSGKTICAEFAILRMLLQSSEGRCVYITPMEALAEQVYMDWYEKFQDRLNKKVVLLTGETSTDLKLLGKGNIIISTPEKWDILSRRWKQRKNVQNINLFVVDEVHLIGGENGPVLEVICSRMRYISSQIERPIRIVALSSSLSNAKDVAHWLGCSATSTFNFHPNVRPVPLELHIQGFNISHTQTRLLSMAKPVYHAITKHSPKKPVIVFVPSRKQTRLTAIDILTTCAADIQRQRFLHCTEKDLIPYLEKLSDSTLKETLLNGVGYLHEGLSPMERRLVEQLFSSGAIQVVVASRSLCWGMNVAAHLVIIMDTQYYNGKIHAYVDYPIYDVLQMVGHANRPLQDDEGRCVIMCQGSKKDFFKKFLYEPLPVESHLDHCMHDHFNAEIVTKTIENKQDAVDYLTWTFLYRRMTQNPNYYNLQGISHRHLSDHLSELVEQTLSDLEQSKCISIEDEMDVAPLNLGMIAAYYYINYTTIELFSMSLNAKTKVRGLIEIISNAAEYENIPIRHHEDNLLRQLAQKVPHKLNNPKFNDPHVKTNLLLQAHLSRMQLSAELQSDTEEILSKAIRLIQACVDVLSSNGWLSPALAAMELAQMVTQAMWSKDSYLKQLPHFTSEHIKRCTDKGVESVFDIMEMEDEERNALLQLTDSQIADVARFCNRYPNIELSYEVVDKDSIRSGGPVVVLVQLEREEEVTGPVIAPLFPQKREEGWWVVIGDAKSNSLISIKRLTLQQKAKVKLDFVAPATGAHNYTLYFMSDAYMGCDQEYKFSVDVKEAETDSDSD</sequence>
<gene>
    <name type="primary">SNRNP200</name>
    <name type="synonym">ASCC3L1</name>
    <name evidence="32" type="synonym">BRR2</name>
    <name type="synonym">HELIC2</name>
    <name type="synonym">KIAA0788</name>
</gene>
<feature type="chain" id="PRO_0000102087" description="U5 small nuclear ribonucleoprotein 200 kDa helicase">
    <location>
        <begin position="1"/>
        <end position="2136"/>
    </location>
</feature>
<feature type="domain" description="Helicase ATP-binding 1" evidence="4">
    <location>
        <begin position="490"/>
        <end position="673"/>
    </location>
</feature>
<feature type="domain" description="Helicase C-terminal 1" evidence="5">
    <location>
        <begin position="684"/>
        <end position="921"/>
    </location>
</feature>
<feature type="domain" description="SEC63 1">
    <location>
        <begin position="981"/>
        <end position="1286"/>
    </location>
</feature>
<feature type="domain" description="Helicase ATP-binding 2" evidence="4">
    <location>
        <begin position="1337"/>
        <end position="1512"/>
    </location>
</feature>
<feature type="domain" description="Helicase C-terminal 2" evidence="5">
    <location>
        <begin position="1545"/>
        <end position="1753"/>
    </location>
</feature>
<feature type="domain" description="SEC63 2">
    <location>
        <begin position="1812"/>
        <end position="2124"/>
    </location>
</feature>
<feature type="region of interest" description="Disordered" evidence="6">
    <location>
        <begin position="50"/>
        <end position="80"/>
    </location>
</feature>
<feature type="region of interest" description="Interaction with C9orf78 and WBP4" evidence="28">
    <location>
        <begin position="395"/>
        <end position="2129"/>
    </location>
</feature>
<feature type="region of interest" description="Interaction with TSSC4" evidence="27">
    <location>
        <begin position="1282"/>
        <end position="2136"/>
    </location>
</feature>
<feature type="coiled-coil region" evidence="3">
    <location>
        <begin position="54"/>
        <end position="84"/>
    </location>
</feature>
<feature type="short sequence motif" description="DEIH box">
    <location>
        <begin position="615"/>
        <end position="618"/>
    </location>
</feature>
<feature type="short sequence motif" description="DEVH box">
    <location>
        <begin position="1454"/>
        <end position="1457"/>
    </location>
</feature>
<feature type="binding site" evidence="4 14 36">
    <location>
        <begin position="503"/>
        <end position="510"/>
    </location>
    <ligand>
        <name>ATP</name>
        <dbReference type="ChEBI" id="CHEBI:30616"/>
    </ligand>
</feature>
<feature type="binding site" evidence="4 14 36">
    <location>
        <begin position="1350"/>
        <end position="1357"/>
    </location>
    <ligand>
        <name>ATP</name>
        <dbReference type="ChEBI" id="CHEBI:30616"/>
    </ligand>
</feature>
<feature type="modified residue" description="Phosphoserine" evidence="60 61">
    <location>
        <position position="17"/>
    </location>
</feature>
<feature type="modified residue" description="Phosphoserine" evidence="53 58 60">
    <location>
        <position position="26"/>
    </location>
</feature>
<feature type="modified residue" description="Phosphoserine" evidence="51 52 54 55 58 59 60 61">
    <location>
        <position position="225"/>
    </location>
</feature>
<feature type="modified residue" description="Phosphothreonine" evidence="60">
    <location>
        <position position="389"/>
    </location>
</feature>
<feature type="modified residue" description="Phosphotyrosine" evidence="1">
    <location>
        <position position="709"/>
    </location>
</feature>
<feature type="modified residue" description="N6-acetyllysine" evidence="56">
    <location>
        <position position="971"/>
    </location>
</feature>
<feature type="modified residue" description="Phosphothreonine" evidence="60">
    <location>
        <position position="1428"/>
    </location>
</feature>
<feature type="modified residue" description="Phosphothreonine" evidence="2">
    <location>
        <position position="1765"/>
    </location>
</feature>
<feature type="modified residue" description="Phosphoserine" evidence="60">
    <location>
        <position position="2002"/>
    </location>
</feature>
<feature type="modified residue" description="Phosphothreonine" evidence="53 57">
    <location>
        <position position="2131"/>
    </location>
</feature>
<feature type="modified residue" description="Phosphoserine" evidence="53 57">
    <location>
        <position position="2133"/>
    </location>
</feature>
<feature type="modified residue" description="Phosphoserine" evidence="53 57">
    <location>
        <position position="2135"/>
    </location>
</feature>
<feature type="cross-link" description="Glycyl lysine isopeptide (Lys-Gly) (interchain with G-Cter in SUMO2)" evidence="62">
    <location>
        <position position="46"/>
    </location>
</feature>
<feature type="splice variant" id="VSP_026622" description="In isoform 2." evidence="31">
    <location>
        <begin position="561"/>
        <end position="2071"/>
    </location>
</feature>
<feature type="sequence variant" id="VAR_071689" description="In RP33." evidence="15">
    <original>C</original>
    <variation>R</variation>
    <location>
        <position position="502"/>
    </location>
</feature>
<feature type="sequence variant" id="VAR_071690" description="In RP33; dbSNP:rs2063918440." evidence="16">
    <original>A</original>
    <variation>V</variation>
    <location>
        <position position="542"/>
    </location>
</feature>
<feature type="sequence variant" id="VAR_065587" description="In RP33; dbSNP:rs959069360." evidence="12 16">
    <original>R</original>
    <variation>C</variation>
    <location>
        <position position="681"/>
    </location>
</feature>
<feature type="sequence variant" id="VAR_065588" description="In RP33; dbSNP:rs527236113." evidence="12 16">
    <original>R</original>
    <variation>H</variation>
    <location>
        <position position="681"/>
    </location>
</feature>
<feature type="sequence variant" id="VAR_071691" description="In RP33; dbSNP:rs2063893838." evidence="16">
    <original>P</original>
    <variation>S</variation>
    <location>
        <position position="682"/>
    </location>
</feature>
<feature type="sequence variant" id="VAR_065589" description="In RP33; uncertain significance; dbSNP:rs527236114." evidence="12">
    <original>V</original>
    <variation>L</variation>
    <location>
        <position position="683"/>
    </location>
</feature>
<feature type="sequence variant" id="VAR_065590" description="In RP33; dbSNP:rs556400279." evidence="12">
    <original>Y</original>
    <variation>C</variation>
    <location>
        <position position="689"/>
    </location>
</feature>
<feature type="sequence variant" id="VAR_071692" description="In RP33; dbSNP:rs1457428682." evidence="15">
    <original>I</original>
    <variation>V</variation>
    <location>
        <position position="698"/>
    </location>
</feature>
<feature type="sequence variant" id="VAR_071693" description="In RP33; dbSNP:rs397514575." evidence="13">
    <original>Q</original>
    <variation>E</variation>
    <location>
        <position position="885"/>
    </location>
</feature>
<feature type="sequence variant" id="VAR_063539" description="In RP33; strongly reduced RNA helicase activity; dbSNP:rs267607077." evidence="8 11 12 14 16">
    <original>S</original>
    <variation>L</variation>
    <location>
        <position position="1087"/>
    </location>
</feature>
<feature type="sequence variant" id="VAR_063540" description="In RP33; dbSNP:rs397514574." evidence="10">
    <original>R</original>
    <variation>L</variation>
    <location>
        <position position="1090"/>
    </location>
</feature>
<feature type="sequence variant" id="VAR_035943" description="In a colorectal cancer sample; somatic mutation." evidence="9">
    <original>F</original>
    <variation>L</variation>
    <location>
        <position position="1736"/>
    </location>
</feature>
<feature type="sequence variant" id="VAR_071694" description="In RP33; dbSNP:rs749546665." evidence="15">
    <original>R</original>
    <variation>H</variation>
    <location>
        <position position="1779"/>
    </location>
</feature>
<feature type="sequence variant" id="VAR_071695" description="In dbSNP:rs201691299." evidence="15">
    <original>A</original>
    <variation>T</variation>
    <location>
        <position position="1995"/>
    </location>
</feature>
<feature type="mutagenesis site" description="Strongly decreases ATP-dependent RNA helicase activity." evidence="14">
    <original>R</original>
    <variation>A</variation>
    <location>
        <position position="603"/>
    </location>
</feature>
<feature type="mutagenesis site" description="Strongly decreases ATP-dependent RNA helicase activity." evidence="14">
    <original>R</original>
    <variation>A</variation>
    <location>
        <position position="637"/>
    </location>
</feature>
<feature type="mutagenesis site" description="Decreases ATP-dependent RNA helicase activity." evidence="14">
    <original>K</original>
    <variation>A</variation>
    <location>
        <position position="1544"/>
    </location>
</feature>
<feature type="mutagenesis site" description="Strongly decreases ATP-dependent RNA helicase activity." evidence="14">
    <original>H</original>
    <variation>A</variation>
    <location>
        <position position="1548"/>
    </location>
</feature>
<feature type="mutagenesis site" description="Decreases ATP-dependent RNA helicase activity." evidence="14">
    <original>T</original>
    <variation>A</variation>
    <location>
        <position position="1578"/>
    </location>
</feature>
<feature type="sequence conflict" description="In Ref. 6; AAH65924." evidence="33" ref="6">
    <original>C</original>
    <variation>F</variation>
    <location>
        <position position="588"/>
    </location>
</feature>
<feature type="sequence conflict" description="In Ref. 5; CAA94089." evidence="33" ref="5">
    <original>I</original>
    <variation>V</variation>
    <location>
        <position position="613"/>
    </location>
</feature>
<feature type="sequence conflict" description="In Ref. 5; CAA94089." evidence="33" ref="5">
    <original>A</original>
    <variation>G</variation>
    <location>
        <position position="802"/>
    </location>
</feature>
<feature type="sequence conflict" description="In Ref. 2; BAB14906." evidence="33" ref="2">
    <original>R</original>
    <variation>H</variation>
    <location>
        <position position="840"/>
    </location>
</feature>
<feature type="sequence conflict" description="In Ref. 2; BAB14906." evidence="33" ref="2">
    <original>Q</original>
    <variation>R</variation>
    <location>
        <position position="1322"/>
    </location>
</feature>
<feature type="sequence conflict" description="In Ref. 5; CAA94089." evidence="33" ref="5">
    <original>S</original>
    <variation>N</variation>
    <location>
        <position position="1371"/>
    </location>
</feature>
<feature type="sequence conflict" description="In Ref. 5; CAA94089." evidence="33" ref="5">
    <original>EALA</original>
    <variation>RLWQ</variation>
    <location>
        <begin position="1383"/>
        <end position="1386"/>
    </location>
</feature>
<feature type="sequence conflict" description="In Ref. 2; BAB14906." evidence="33" ref="2">
    <original>Y</original>
    <variation>N</variation>
    <location>
        <position position="1476"/>
    </location>
</feature>
<feature type="sequence conflict" description="In Ref. 5; CAA94089." evidence="33" ref="5">
    <original>Y</original>
    <variation>F</variation>
    <location>
        <position position="1547"/>
    </location>
</feature>
<feature type="sequence conflict" description="In Ref. 5; CAA94089." evidence="33" ref="5">
    <original>Q</original>
    <variation>L</variation>
    <location>
        <position position="1667"/>
    </location>
</feature>
<feature type="sequence conflict" description="In Ref. 5; CAA94089." evidence="33" ref="5">
    <original>K</original>
    <variation>E</variation>
    <location>
        <position position="1956"/>
    </location>
</feature>
<feature type="sequence conflict" description="In Ref. 5; CAA94089." evidence="33" ref="5">
    <original>KQ</original>
    <variation>RR</variation>
    <location>
        <begin position="1961"/>
        <end position="1962"/>
    </location>
</feature>
<feature type="sequence conflict" description="In Ref. 5; CAA94089." evidence="33" ref="5">
    <original>HFTSEHI</original>
    <variation>PFPSGLF</variation>
    <location>
        <begin position="1965"/>
        <end position="1971"/>
    </location>
</feature>
<feature type="sequence conflict" description="In Ref. 2; BAB14906." evidence="33" ref="2">
    <original>S</original>
    <variation>R</variation>
    <location>
        <position position="2031"/>
    </location>
</feature>
<feature type="sequence conflict" description="In Ref. 6; AAH65924." evidence="33" ref="6">
    <original>W</original>
    <variation>L</variation>
    <location>
        <position position="2065"/>
    </location>
</feature>
<feature type="sequence conflict" description="In Ref. 5; CAA94089." evidence="33" ref="5">
    <original>AHNY</original>
    <variation>GRHN</variation>
    <location>
        <begin position="2101"/>
        <end position="2104"/>
    </location>
</feature>
<feature type="turn" evidence="81">
    <location>
        <begin position="52"/>
        <end position="55"/>
    </location>
</feature>
<feature type="helix" evidence="73">
    <location>
        <begin position="107"/>
        <end position="124"/>
    </location>
</feature>
<feature type="helix" evidence="73">
    <location>
        <begin position="129"/>
        <end position="144"/>
    </location>
</feature>
<feature type="helix" evidence="73">
    <location>
        <begin position="151"/>
        <end position="161"/>
    </location>
</feature>
<feature type="helix" evidence="73">
    <location>
        <begin position="166"/>
        <end position="177"/>
    </location>
</feature>
<feature type="helix" evidence="79">
    <location>
        <begin position="411"/>
        <end position="414"/>
    </location>
</feature>
<feature type="helix" evidence="79">
    <location>
        <begin position="419"/>
        <end position="421"/>
    </location>
</feature>
<feature type="strand" evidence="79">
    <location>
        <begin position="435"/>
        <end position="439"/>
    </location>
</feature>
<feature type="strand" evidence="79">
    <location>
        <begin position="442"/>
        <end position="447"/>
    </location>
</feature>
<feature type="turn" evidence="78">
    <location>
        <begin position="456"/>
        <end position="458"/>
    </location>
</feature>
<feature type="helix" evidence="79">
    <location>
        <begin position="464"/>
        <end position="466"/>
    </location>
</feature>
<feature type="helix" evidence="79">
    <location>
        <begin position="469"/>
        <end position="472"/>
    </location>
</feature>
<feature type="helix" evidence="79">
    <location>
        <begin position="473"/>
        <end position="475"/>
    </location>
</feature>
<feature type="helix" evidence="79">
    <location>
        <begin position="483"/>
        <end position="494"/>
    </location>
</feature>
<feature type="strand" evidence="79">
    <location>
        <begin position="499"/>
        <end position="502"/>
    </location>
</feature>
<feature type="helix" evidence="66">
    <location>
        <begin position="505"/>
        <end position="507"/>
    </location>
</feature>
<feature type="helix" evidence="79">
    <location>
        <begin position="509"/>
        <end position="522"/>
    </location>
</feature>
<feature type="helix" evidence="66">
    <location>
        <begin position="526"/>
        <end position="528"/>
    </location>
</feature>
<feature type="strand" evidence="76">
    <location>
        <begin position="529"/>
        <end position="531"/>
    </location>
</feature>
<feature type="strand" evidence="78">
    <location>
        <begin position="533"/>
        <end position="535"/>
    </location>
</feature>
<feature type="strand" evidence="79">
    <location>
        <begin position="537"/>
        <end position="541"/>
    </location>
</feature>
<feature type="helix" evidence="79">
    <location>
        <begin position="545"/>
        <end position="559"/>
    </location>
</feature>
<feature type="helix" evidence="79">
    <location>
        <begin position="560"/>
        <end position="562"/>
    </location>
</feature>
<feature type="strand" evidence="79">
    <location>
        <begin position="566"/>
        <end position="568"/>
    </location>
</feature>
<feature type="strand" evidence="70">
    <location>
        <begin position="569"/>
        <end position="571"/>
    </location>
</feature>
<feature type="turn" evidence="76">
    <location>
        <begin position="574"/>
        <end position="577"/>
    </location>
</feature>
<feature type="helix" evidence="79">
    <location>
        <begin position="578"/>
        <end position="582"/>
    </location>
</feature>
<feature type="strand" evidence="79">
    <location>
        <begin position="584"/>
        <end position="588"/>
    </location>
</feature>
<feature type="helix" evidence="79">
    <location>
        <begin position="590"/>
        <end position="598"/>
    </location>
</feature>
<feature type="turn" evidence="68">
    <location>
        <begin position="601"/>
        <end position="603"/>
    </location>
</feature>
<feature type="helix" evidence="79">
    <location>
        <begin position="605"/>
        <end position="607"/>
    </location>
</feature>
<feature type="strand" evidence="79">
    <location>
        <begin position="608"/>
        <end position="614"/>
    </location>
</feature>
<feature type="helix" evidence="79">
    <location>
        <begin position="617"/>
        <end position="621"/>
    </location>
</feature>
<feature type="helix" evidence="79">
    <location>
        <begin position="625"/>
        <end position="642"/>
    </location>
</feature>
<feature type="strand" evidence="79">
    <location>
        <begin position="647"/>
        <end position="652"/>
    </location>
</feature>
<feature type="helix" evidence="79">
    <location>
        <begin position="658"/>
        <end position="664"/>
    </location>
</feature>
<feature type="turn" evidence="79">
    <location>
        <begin position="669"/>
        <end position="671"/>
    </location>
</feature>
<feature type="strand" evidence="79">
    <location>
        <begin position="672"/>
        <end position="675"/>
    </location>
</feature>
<feature type="helix" evidence="79">
    <location>
        <begin position="678"/>
        <end position="680"/>
    </location>
</feature>
<feature type="strand" evidence="78">
    <location>
        <begin position="681"/>
        <end position="683"/>
    </location>
</feature>
<feature type="strand" evidence="79">
    <location>
        <begin position="685"/>
        <end position="692"/>
    </location>
</feature>
<feature type="helix" evidence="79">
    <location>
        <begin position="697"/>
        <end position="715"/>
    </location>
</feature>
<feature type="turn" evidence="79">
    <location>
        <begin position="716"/>
        <end position="718"/>
    </location>
</feature>
<feature type="strand" evidence="79">
    <location>
        <begin position="721"/>
        <end position="724"/>
    </location>
</feature>
<feature type="helix" evidence="79">
    <location>
        <begin position="728"/>
        <end position="744"/>
    </location>
</feature>
<feature type="turn" evidence="75">
    <location>
        <begin position="745"/>
        <end position="747"/>
    </location>
</feature>
<feature type="helix" evidence="79">
    <location>
        <begin position="748"/>
        <end position="750"/>
    </location>
</feature>
<feature type="turn" evidence="65">
    <location>
        <begin position="751"/>
        <end position="753"/>
    </location>
</feature>
<feature type="strand" evidence="71">
    <location>
        <begin position="754"/>
        <end position="756"/>
    </location>
</feature>
<feature type="helix" evidence="79">
    <location>
        <begin position="757"/>
        <end position="768"/>
    </location>
</feature>
<feature type="helix" evidence="79">
    <location>
        <begin position="772"/>
        <end position="777"/>
    </location>
</feature>
<feature type="helix" evidence="79">
    <location>
        <begin position="778"/>
        <end position="780"/>
    </location>
</feature>
<feature type="strand" evidence="79">
    <location>
        <begin position="782"/>
        <end position="785"/>
    </location>
</feature>
<feature type="strand" evidence="78">
    <location>
        <begin position="787"/>
        <end position="789"/>
    </location>
</feature>
<feature type="helix" evidence="79">
    <location>
        <begin position="791"/>
        <end position="802"/>
    </location>
</feature>
<feature type="strand" evidence="79">
    <location>
        <begin position="807"/>
        <end position="811"/>
    </location>
</feature>
<feature type="helix" evidence="79">
    <location>
        <begin position="813"/>
        <end position="818"/>
    </location>
</feature>
<feature type="strand" evidence="79">
    <location>
        <begin position="823"/>
        <end position="829"/>
    </location>
</feature>
<feature type="strand" evidence="79">
    <location>
        <begin position="831"/>
        <end position="835"/>
    </location>
</feature>
<feature type="turn" evidence="79">
    <location>
        <begin position="836"/>
        <end position="839"/>
    </location>
</feature>
<feature type="strand" evidence="79">
    <location>
        <begin position="840"/>
        <end position="843"/>
    </location>
</feature>
<feature type="helix" evidence="79">
    <location>
        <begin position="846"/>
        <end position="854"/>
    </location>
</feature>
<feature type="strand" evidence="80">
    <location>
        <begin position="855"/>
        <end position="857"/>
    </location>
</feature>
<feature type="turn" evidence="79">
    <location>
        <begin position="859"/>
        <end position="861"/>
    </location>
</feature>
<feature type="strand" evidence="79">
    <location>
        <begin position="865"/>
        <end position="872"/>
    </location>
</feature>
<feature type="helix" evidence="79">
    <location>
        <begin position="873"/>
        <end position="875"/>
    </location>
</feature>
<feature type="helix" evidence="79">
    <location>
        <begin position="876"/>
        <end position="883"/>
    </location>
</feature>
<feature type="helix" evidence="79">
    <location>
        <begin position="893"/>
        <end position="906"/>
    </location>
</feature>
<feature type="helix" evidence="79">
    <location>
        <begin position="913"/>
        <end position="920"/>
    </location>
</feature>
<feature type="helix" evidence="79">
    <location>
        <begin position="924"/>
        <end position="931"/>
    </location>
</feature>
<feature type="helix" evidence="79">
    <location>
        <begin position="933"/>
        <end position="936"/>
    </location>
</feature>
<feature type="helix" evidence="79">
    <location>
        <begin position="940"/>
        <end position="944"/>
    </location>
</feature>
<feature type="helix" evidence="79">
    <location>
        <begin position="950"/>
        <end position="966"/>
    </location>
</feature>
<feature type="strand" evidence="79">
    <location>
        <begin position="969"/>
        <end position="973"/>
    </location>
</feature>
<feature type="turn" evidence="79">
    <location>
        <begin position="974"/>
        <end position="977"/>
    </location>
</feature>
<feature type="strand" evidence="79">
    <location>
        <begin position="978"/>
        <end position="981"/>
    </location>
</feature>
<feature type="helix" evidence="79">
    <location>
        <begin position="983"/>
        <end position="990"/>
    </location>
</feature>
<feature type="helix" evidence="79">
    <location>
        <begin position="995"/>
        <end position="1004"/>
    </location>
</feature>
<feature type="helix" evidence="79">
    <location>
        <begin position="1011"/>
        <end position="1019"/>
    </location>
</feature>
<feature type="helix" evidence="79">
    <location>
        <begin position="1022"/>
        <end position="1024"/>
    </location>
</feature>
<feature type="helix" evidence="79">
    <location>
        <begin position="1031"/>
        <end position="1033"/>
    </location>
</feature>
<feature type="helix" evidence="79">
    <location>
        <begin position="1034"/>
        <end position="1041"/>
    </location>
</feature>
<feature type="strand" evidence="64">
    <location>
        <begin position="1044"/>
        <end position="1046"/>
    </location>
</feature>
<feature type="strand" evidence="72">
    <location>
        <begin position="1052"/>
        <end position="1054"/>
    </location>
</feature>
<feature type="helix" evidence="79">
    <location>
        <begin position="1055"/>
        <end position="1067"/>
    </location>
</feature>
<feature type="helix" evidence="79">
    <location>
        <begin position="1075"/>
        <end position="1102"/>
    </location>
</feature>
<feature type="helix" evidence="79">
    <location>
        <begin position="1105"/>
        <end position="1120"/>
    </location>
</feature>
<feature type="strand" evidence="80">
    <location>
        <begin position="1124"/>
        <end position="1126"/>
    </location>
</feature>
<feature type="helix" evidence="79">
    <location>
        <begin position="1128"/>
        <end position="1131"/>
    </location>
</feature>
<feature type="strand" evidence="67">
    <location>
        <begin position="1132"/>
        <end position="1135"/>
    </location>
</feature>
<feature type="helix" evidence="79">
    <location>
        <begin position="1137"/>
        <end position="1145"/>
    </location>
</feature>
<feature type="helix" evidence="79">
    <location>
        <begin position="1150"/>
        <end position="1155"/>
    </location>
</feature>
<feature type="helix" evidence="79">
    <location>
        <begin position="1158"/>
        <end position="1164"/>
    </location>
</feature>
<feature type="helix" evidence="79">
    <location>
        <begin position="1168"/>
        <end position="1170"/>
    </location>
</feature>
<feature type="helix" evidence="79">
    <location>
        <begin position="1171"/>
        <end position="1180"/>
    </location>
</feature>
<feature type="strand" evidence="79">
    <location>
        <begin position="1184"/>
        <end position="1192"/>
    </location>
</feature>
<feature type="strand" evidence="79">
    <location>
        <begin position="1194"/>
        <end position="1206"/>
    </location>
</feature>
<feature type="helix" evidence="79">
    <location>
        <begin position="1212"/>
        <end position="1215"/>
    </location>
</feature>
<feature type="strand" evidence="79">
    <location>
        <begin position="1218"/>
        <end position="1226"/>
    </location>
</feature>
<feature type="strand" evidence="69">
    <location>
        <begin position="1228"/>
        <end position="1230"/>
    </location>
</feature>
<feature type="strand" evidence="79">
    <location>
        <begin position="1232"/>
        <end position="1242"/>
    </location>
</feature>
<feature type="helix" evidence="79">
    <location>
        <begin position="1243"/>
        <end position="1245"/>
    </location>
</feature>
<feature type="strand" evidence="80">
    <location>
        <begin position="1246"/>
        <end position="1248"/>
    </location>
</feature>
<feature type="strand" evidence="79">
    <location>
        <begin position="1250"/>
        <end position="1257"/>
    </location>
</feature>
<feature type="strand" evidence="79">
    <location>
        <begin position="1264"/>
        <end position="1275"/>
    </location>
</feature>
<feature type="strand" evidence="79">
    <location>
        <begin position="1279"/>
        <end position="1285"/>
    </location>
</feature>
<feature type="helix" evidence="79">
    <location>
        <begin position="1309"/>
        <end position="1312"/>
    </location>
</feature>
<feature type="helix" evidence="79">
    <location>
        <begin position="1315"/>
        <end position="1318"/>
    </location>
</feature>
<feature type="turn" evidence="79">
    <location>
        <begin position="1319"/>
        <end position="1324"/>
    </location>
</feature>
<feature type="strand" evidence="79">
    <location>
        <begin position="1326"/>
        <end position="1328"/>
    </location>
</feature>
<feature type="helix" evidence="79">
    <location>
        <begin position="1330"/>
        <end position="1341"/>
    </location>
</feature>
<feature type="strand" evidence="79">
    <location>
        <begin position="1346"/>
        <end position="1349"/>
    </location>
</feature>
<feature type="strand" evidence="66">
    <location>
        <begin position="1352"/>
        <end position="1355"/>
    </location>
</feature>
<feature type="helix" evidence="79">
    <location>
        <begin position="1356"/>
        <end position="1370"/>
    </location>
</feature>
<feature type="strand" evidence="79">
    <location>
        <begin position="1376"/>
        <end position="1379"/>
    </location>
</feature>
<feature type="helix" evidence="79">
    <location>
        <begin position="1383"/>
        <end position="1397"/>
    </location>
</feature>
<feature type="turn" evidence="79">
    <location>
        <begin position="1398"/>
        <end position="1401"/>
    </location>
</feature>
<feature type="strand" evidence="79">
    <location>
        <begin position="1405"/>
        <end position="1407"/>
    </location>
</feature>
<feature type="helix" evidence="79">
    <location>
        <begin position="1412"/>
        <end position="1421"/>
    </location>
</feature>
<feature type="strand" evidence="79">
    <location>
        <begin position="1423"/>
        <end position="1427"/>
    </location>
</feature>
<feature type="helix" evidence="79">
    <location>
        <begin position="1429"/>
        <end position="1437"/>
    </location>
</feature>
<feature type="turn" evidence="79">
    <location>
        <begin position="1438"/>
        <end position="1441"/>
    </location>
</feature>
<feature type="helix" evidence="79">
    <location>
        <begin position="1443"/>
        <end position="1446"/>
    </location>
</feature>
<feature type="strand" evidence="79">
    <location>
        <begin position="1449"/>
        <end position="1453"/>
    </location>
</feature>
<feature type="helix" evidence="79">
    <location>
        <begin position="1456"/>
        <end position="1460"/>
    </location>
</feature>
<feature type="helix" evidence="79">
    <location>
        <begin position="1464"/>
        <end position="1481"/>
    </location>
</feature>
<feature type="strand" evidence="79">
    <location>
        <begin position="1486"/>
        <end position="1492"/>
    </location>
</feature>
<feature type="strand" evidence="80">
    <location>
        <begin position="1494"/>
        <end position="1496"/>
    </location>
</feature>
<feature type="helix" evidence="79">
    <location>
        <begin position="1497"/>
        <end position="1503"/>
    </location>
</feature>
<feature type="helix" evidence="79">
    <location>
        <begin position="1508"/>
        <end position="1510"/>
    </location>
</feature>
<feature type="strand" evidence="79">
    <location>
        <begin position="1511"/>
        <end position="1513"/>
    </location>
</feature>
<feature type="helix" evidence="79">
    <location>
        <begin position="1516"/>
        <end position="1518"/>
    </location>
</feature>
<feature type="strand" evidence="81">
    <location>
        <begin position="1519"/>
        <end position="1521"/>
    </location>
</feature>
<feature type="strand" evidence="79">
    <location>
        <begin position="1523"/>
        <end position="1530"/>
    </location>
</feature>
<feature type="helix" evidence="79">
    <location>
        <begin position="1535"/>
        <end position="1553"/>
    </location>
</feature>
<feature type="strand" evidence="79">
    <location>
        <begin position="1555"/>
        <end position="1557"/>
    </location>
</feature>
<feature type="strand" evidence="79">
    <location>
        <begin position="1559"/>
        <end position="1565"/>
    </location>
</feature>
<feature type="helix" evidence="79">
    <location>
        <begin position="1566"/>
        <end position="1582"/>
    </location>
</feature>
<feature type="strand" evidence="77">
    <location>
        <begin position="1583"/>
        <end position="1585"/>
    </location>
</feature>
<feature type="turn" evidence="79">
    <location>
        <begin position="1586"/>
        <end position="1589"/>
    </location>
</feature>
<feature type="helix" evidence="79">
    <location>
        <begin position="1594"/>
        <end position="1602"/>
    </location>
</feature>
<feature type="helix" evidence="79">
    <location>
        <begin position="1607"/>
        <end position="1614"/>
    </location>
</feature>
<feature type="strand" evidence="79">
    <location>
        <begin position="1617"/>
        <end position="1620"/>
    </location>
</feature>
<feature type="helix" evidence="79">
    <location>
        <begin position="1626"/>
        <end position="1637"/>
    </location>
</feature>
<feature type="strand" evidence="79">
    <location>
        <begin position="1640"/>
        <end position="1647"/>
    </location>
</feature>
<feature type="helix" evidence="79">
    <location>
        <begin position="1648"/>
        <end position="1650"/>
    </location>
</feature>
<feature type="strand" evidence="70">
    <location>
        <begin position="1651"/>
        <end position="1653"/>
    </location>
</feature>
<feature type="strand" evidence="79">
    <location>
        <begin position="1658"/>
        <end position="1664"/>
    </location>
</feature>
<feature type="strand" evidence="79">
    <location>
        <begin position="1666"/>
        <end position="1670"/>
    </location>
</feature>
<feature type="turn" evidence="79">
    <location>
        <begin position="1671"/>
        <end position="1674"/>
    </location>
</feature>
<feature type="strand" evidence="79">
    <location>
        <begin position="1675"/>
        <end position="1678"/>
    </location>
</feature>
<feature type="helix" evidence="79">
    <location>
        <begin position="1681"/>
        <end position="1688"/>
    </location>
</feature>
<feature type="helix" evidence="74">
    <location>
        <begin position="1689"/>
        <end position="1691"/>
    </location>
</feature>
<feature type="turn" evidence="79">
    <location>
        <begin position="1694"/>
        <end position="1696"/>
    </location>
</feature>
<feature type="strand" evidence="79">
    <location>
        <begin position="1700"/>
        <end position="1707"/>
    </location>
</feature>
<feature type="helix" evidence="79">
    <location>
        <begin position="1708"/>
        <end position="1710"/>
    </location>
</feature>
<feature type="helix" evidence="79">
    <location>
        <begin position="1711"/>
        <end position="1719"/>
    </location>
</feature>
<feature type="helix" evidence="79">
    <location>
        <begin position="1728"/>
        <end position="1730"/>
    </location>
</feature>
<feature type="helix" evidence="79">
    <location>
        <begin position="1733"/>
        <end position="1741"/>
    </location>
</feature>
<feature type="helix" evidence="79">
    <location>
        <begin position="1748"/>
        <end position="1755"/>
    </location>
</feature>
<feature type="helix" evidence="79">
    <location>
        <begin position="1759"/>
        <end position="1766"/>
    </location>
</feature>
<feature type="helix" evidence="79">
    <location>
        <begin position="1768"/>
        <end position="1771"/>
    </location>
</feature>
<feature type="helix" evidence="79">
    <location>
        <begin position="1778"/>
        <end position="1798"/>
    </location>
</feature>
<feature type="strand" evidence="79">
    <location>
        <begin position="1801"/>
        <end position="1805"/>
    </location>
</feature>
<feature type="turn" evidence="79">
    <location>
        <begin position="1806"/>
        <end position="1808"/>
    </location>
</feature>
<feature type="strand" evidence="79">
    <location>
        <begin position="1809"/>
        <end position="1812"/>
    </location>
</feature>
<feature type="helix" evidence="79">
    <location>
        <begin position="1814"/>
        <end position="1822"/>
    </location>
</feature>
<feature type="helix" evidence="79">
    <location>
        <begin position="1826"/>
        <end position="1835"/>
    </location>
</feature>
<feature type="helix" evidence="63">
    <location>
        <begin position="1842"/>
        <end position="1850"/>
    </location>
</feature>
<feature type="helix" evidence="63">
    <location>
        <begin position="1853"/>
        <end position="1855"/>
    </location>
</feature>
<feature type="strand" evidence="80">
    <location>
        <begin position="1856"/>
        <end position="1858"/>
    </location>
</feature>
<feature type="helix" evidence="76">
    <location>
        <begin position="1862"/>
        <end position="1864"/>
    </location>
</feature>
<feature type="helix" evidence="63">
    <location>
        <begin position="1865"/>
        <end position="1874"/>
    </location>
</feature>
<feature type="strand" evidence="63">
    <location>
        <begin position="1875"/>
        <end position="1877"/>
    </location>
</feature>
<feature type="strand" evidence="68">
    <location>
        <begin position="1884"/>
        <end position="1886"/>
    </location>
</feature>
<feature type="helix" evidence="63">
    <location>
        <begin position="1887"/>
        <end position="1899"/>
    </location>
</feature>
<feature type="helix" evidence="63">
    <location>
        <begin position="1906"/>
        <end position="1932"/>
    </location>
</feature>
<feature type="helix" evidence="63">
    <location>
        <begin position="1936"/>
        <end position="1951"/>
    </location>
</feature>
<feature type="strand" evidence="79">
    <location>
        <begin position="1955"/>
        <end position="1957"/>
    </location>
</feature>
<feature type="helix" evidence="63">
    <location>
        <begin position="1959"/>
        <end position="1962"/>
    </location>
</feature>
<feature type="strand" evidence="80">
    <location>
        <begin position="1963"/>
        <end position="1965"/>
    </location>
</feature>
<feature type="helix" evidence="63">
    <location>
        <begin position="1968"/>
        <end position="1976"/>
    </location>
</feature>
<feature type="helix" evidence="63">
    <location>
        <begin position="1982"/>
        <end position="1987"/>
    </location>
</feature>
<feature type="helix" evidence="63">
    <location>
        <begin position="1990"/>
        <end position="1997"/>
    </location>
</feature>
<feature type="helix" evidence="63">
    <location>
        <begin position="2001"/>
        <end position="2011"/>
    </location>
</feature>
<feature type="strand" evidence="63">
    <location>
        <begin position="2017"/>
        <end position="2023"/>
    </location>
</feature>
<feature type="helix" evidence="63">
    <location>
        <begin position="2026"/>
        <end position="2028"/>
    </location>
</feature>
<feature type="strand" evidence="63">
    <location>
        <begin position="2033"/>
        <end position="2043"/>
    </location>
</feature>
<feature type="strand" evidence="78">
    <location>
        <begin position="2048"/>
        <end position="2050"/>
    </location>
</feature>
<feature type="strand" evidence="79">
    <location>
        <begin position="2056"/>
        <end position="2058"/>
    </location>
</feature>
<feature type="strand" evidence="63">
    <location>
        <begin position="2064"/>
        <end position="2070"/>
    </location>
</feature>
<feature type="turn" evidence="63">
    <location>
        <begin position="2071"/>
        <end position="2074"/>
    </location>
</feature>
<feature type="strand" evidence="63">
    <location>
        <begin position="2075"/>
        <end position="2082"/>
    </location>
</feature>
<feature type="strand" evidence="63">
    <location>
        <begin position="2085"/>
        <end position="2095"/>
    </location>
</feature>
<feature type="strand" evidence="63">
    <location>
        <begin position="2098"/>
        <end position="2112"/>
    </location>
</feature>
<feature type="strand" evidence="66">
    <location>
        <begin position="2114"/>
        <end position="2116"/>
    </location>
</feature>
<feature type="strand" evidence="63">
    <location>
        <begin position="2118"/>
        <end position="2127"/>
    </location>
</feature>
<comment type="function">
    <text evidence="8 14 18 19 20 21 22 23 24 25 28 29 30 34">Catalyzes the ATP-dependent unwinding of U4/U6 RNA duplices, an essential step in the assembly of a catalytically active spliceosome (PubMed:35241646). Plays a role in pre-mRNA splicing as a core component of precatalytic, catalytic and postcatalytic spliceosomal complexes (PubMed:28502770, PubMed:28781166, PubMed:29301961, PubMed:29360106, PubMed:29361316, PubMed:30315277, PubMed:30705154, PubMed:30728453). As a component of the minor spliceosome, involved in the splicing of U12-type introns in pre-mRNAs (Probable). Involved in spliceosome assembly, activation and disassembly. Mediates changes in the dynamic network of RNA-RNA interactions in the spliceosome.</text>
</comment>
<comment type="catalytic activity">
    <reaction evidence="14 28">
        <text>ATP + H2O = ADP + phosphate + H(+)</text>
        <dbReference type="Rhea" id="RHEA:13065"/>
        <dbReference type="ChEBI" id="CHEBI:15377"/>
        <dbReference type="ChEBI" id="CHEBI:15378"/>
        <dbReference type="ChEBI" id="CHEBI:30616"/>
        <dbReference type="ChEBI" id="CHEBI:43474"/>
        <dbReference type="ChEBI" id="CHEBI:456216"/>
        <dbReference type="EC" id="3.6.4.13"/>
    </reaction>
</comment>
<comment type="subunit">
    <text evidence="7 8 14 17 18 19 20 21 22 23 24 25 26 27 28 29">Component of a core complex containing at least PRPF8, SNRNP200, EFTUD2 and SNRNP40. Component of the U5 snRNP and U4/U6-U5 tri-snRNP complexes, building blocks of the spliceosome. Component of the U4/U6-U5 tri-snRNP complex composed of the U4, U6 and U5 snRNAs and at least PRPF3, PRPF4, PRPF6, PRPF8, PRPF31, SNRNP200, TXNL4A, SNRNP40, DDX23, CD2BP2, PPIH, SNU13, EFTUD2, SART1 and USP39 (PubMed:16723661, PubMed:26912367, PubMed:8670905). Component of precatalytic, catalytic and postcatalytic spliceosomal complexes (PubMed:11991638, PubMed:28502770, PubMed:28781166, PubMed:29301961, PubMed:29360106, PubMed:29361316, PubMed:30315277, PubMed:30705154, PubMed:30728453, PubMed:35241646). Component of the minor spliceosome, which splices U12-type introns (PubMed:33509932). Interacts with C9orf78; the interaction is direct and mutually exclusive with its interaction with WBP4 (PubMed:35241646). Interacts with WBP4; the interaction is mutually exclusive with its interaction with C9orf78 (PubMed:35241646). Interacts with PRPF8 (PubMed:35241646). Interacts with TSSC4; the interaction is direct, excludes recruitment of C9ORF78 and WBP4 to SNRNP200 and negatively regulates its RNA helicase activity (PubMed:35188580).</text>
</comment>
<comment type="interaction">
    <interactant intactId="EBI-1045395">
        <id>O75643</id>
    </interactant>
    <interactant intactId="EBI-2118090">
        <id>Q7LBR1</id>
        <label>CHMP1B</label>
    </interactant>
    <organismsDiffer>false</organismsDiffer>
    <experiments>3</experiments>
</comment>
<comment type="interaction">
    <interactant intactId="EBI-1045395">
        <id>O75643</id>
    </interactant>
    <interactant intactId="EBI-357897">
        <id>Q15029</id>
        <label>EFTUD2</label>
    </interactant>
    <organismsDiffer>false</organismsDiffer>
    <experiments>6</experiments>
</comment>
<comment type="interaction">
    <interactant intactId="EBI-1045395">
        <id>O75643</id>
    </interactant>
    <interactant intactId="EBI-744239">
        <id>Q14749</id>
        <label>GNMT</label>
    </interactant>
    <organismsDiffer>false</organismsDiffer>
    <experiments>3</experiments>
</comment>
<comment type="interaction">
    <interactant intactId="EBI-1045395">
        <id>O75643</id>
    </interactant>
    <interactant intactId="EBI-536755">
        <id>O94906</id>
        <label>PRPF6</label>
    </interactant>
    <organismsDiffer>false</organismsDiffer>
    <experiments>5</experiments>
</comment>
<comment type="interaction">
    <interactant intactId="EBI-1045395">
        <id>O75643</id>
    </interactant>
    <interactant intactId="EBI-538479">
        <id>Q6P2Q9</id>
        <label>PRPF8</label>
    </interactant>
    <organismsDiffer>false</organismsDiffer>
    <experiments>4</experiments>
</comment>
<comment type="interaction">
    <interactant intactId="EBI-1045395">
        <id>O75643</id>
    </interactant>
    <interactant intactId="EBI-2130294">
        <id>O15541</id>
        <label>RNF113A</label>
    </interactant>
    <organismsDiffer>false</organismsDiffer>
    <experiments>2</experiments>
</comment>
<comment type="interaction">
    <interactant intactId="EBI-1045395">
        <id>O75643</id>
    </interactant>
    <interactant intactId="EBI-607761">
        <id>O43290</id>
        <label>SART1</label>
    </interactant>
    <organismsDiffer>false</organismsDiffer>
    <experiments>5</experiments>
</comment>
<comment type="interaction">
    <interactant intactId="EBI-1045395">
        <id>O75643</id>
    </interactant>
    <interactant intactId="EBI-2462271">
        <id>Q15428</id>
        <label>SF3A2</label>
    </interactant>
    <organismsDiffer>false</organismsDiffer>
    <experiments>2</experiments>
</comment>
<comment type="interaction">
    <interactant intactId="EBI-1045395">
        <id>O75643</id>
    </interactant>
    <interactant intactId="EBI-1045395">
        <id>O75643</id>
        <label>SNRNP200</label>
    </interactant>
    <organismsDiffer>false</organismsDiffer>
    <experiments>2</experiments>
</comment>
<comment type="interaction">
    <interactant intactId="EBI-1045395">
        <id>O75643</id>
    </interactant>
    <interactant intactId="EBI-538492">
        <id>Q96DI7</id>
        <label>SNRNP40</label>
    </interactant>
    <organismsDiffer>false</organismsDiffer>
    <experiments>5</experiments>
</comment>
<comment type="interaction">
    <interactant intactId="EBI-1045395">
        <id>O75643</id>
    </interactant>
    <interactant intactId="EBI-7251981">
        <id>O75554</id>
        <label>WBP4</label>
    </interactant>
    <organismsDiffer>false</organismsDiffer>
    <experiments>11</experiments>
</comment>
<comment type="interaction">
    <interactant intactId="EBI-5456052">
        <id>O75643-1</id>
    </interactant>
    <interactant intactId="EBI-538479">
        <id>Q6P2Q9</id>
        <label>PRPF8</label>
    </interactant>
    <organismsDiffer>false</organismsDiffer>
    <experiments>2</experiments>
</comment>
<comment type="subcellular location">
    <subcellularLocation>
        <location evidence="18 19 20 21 22 23 24 25 30">Nucleus</location>
    </subcellularLocation>
</comment>
<comment type="alternative products">
    <event type="alternative splicing"/>
    <isoform>
        <id>O75643-1</id>
        <name>1</name>
        <sequence type="displayed"/>
    </isoform>
    <isoform>
        <id>O75643-2</id>
        <name>2</name>
        <sequence type="described" ref="VSP_026622"/>
    </isoform>
</comment>
<comment type="tissue specificity">
    <text evidence="11">Widely expressed.</text>
</comment>
<comment type="domain">
    <text evidence="14">Contains two helicase domains. The N-terminal helicase domain has catalytic activity by itself, contrary to the C-terminal helicase domain that may have a regulatory role and enhance the activity of the first helicase domain.</text>
</comment>
<comment type="disease" evidence="8 10 11 12 13 14 15 16">
    <disease id="DI-02672">
        <name>Retinitis pigmentosa 33</name>
        <acronym>RP33</acronym>
        <description>A retinal dystrophy belonging to the group of pigmentary retinopathies. Retinitis pigmentosa is characterized by retinal pigment deposits visible on fundus examination and primary loss of rod photoreceptor cells followed by secondary loss of cone photoreceptors. Patients typically have night vision blindness and loss of midperipheral visual field. As their condition progresses, they lose their far peripheral visual field and eventually central vision as well.</description>
        <dbReference type="MIM" id="610359"/>
    </disease>
    <text>The disease is caused by variants affecting the gene represented in this entry.</text>
</comment>
<comment type="similarity">
    <text evidence="33">Belongs to the helicase family. SKI2 subfamily.</text>
</comment>
<comment type="sequence caution" evidence="33">
    <conflict type="erroneous initiation">
        <sequence resource="EMBL-CDS" id="BAB14906"/>
    </conflict>
    <text>Truncated N-terminus.</text>
</comment>
<dbReference type="EC" id="3.6.4.13" evidence="14 28"/>
<dbReference type="EMBL" id="AY572488">
    <property type="protein sequence ID" value="AAS78571.1"/>
    <property type="molecule type" value="mRNA"/>
</dbReference>
<dbReference type="EMBL" id="AK024391">
    <property type="protein sequence ID" value="BAB14906.1"/>
    <property type="status" value="ALT_INIT"/>
    <property type="molecule type" value="mRNA"/>
</dbReference>
<dbReference type="EMBL" id="AK090671">
    <property type="protein sequence ID" value="BAC03499.1"/>
    <property type="molecule type" value="mRNA"/>
</dbReference>
<dbReference type="EMBL" id="AB018331">
    <property type="protein sequence ID" value="BAA34508.2"/>
    <property type="molecule type" value="mRNA"/>
</dbReference>
<dbReference type="EMBL" id="Z70200">
    <property type="protein sequence ID" value="CAA94089.1"/>
    <property type="molecule type" value="Genomic_DNA"/>
</dbReference>
<dbReference type="EMBL" id="BC065924">
    <property type="protein sequence ID" value="AAH65924.1"/>
    <property type="molecule type" value="mRNA"/>
</dbReference>
<dbReference type="EMBL" id="BC007577">
    <property type="protein sequence ID" value="AAH07577.1"/>
    <property type="molecule type" value="mRNA"/>
</dbReference>
<dbReference type="CCDS" id="CCDS2020.1">
    <molecule id="O75643-1"/>
</dbReference>
<dbReference type="RefSeq" id="NP_054733.2">
    <molecule id="O75643-1"/>
    <property type="nucleotide sequence ID" value="NM_014014.4"/>
</dbReference>
<dbReference type="RefSeq" id="XP_016859092.1">
    <property type="nucleotide sequence ID" value="XM_017003603.1"/>
</dbReference>
<dbReference type="PDB" id="2Q0Z">
    <property type="method" value="X-ray"/>
    <property type="resolution" value="2.00 A"/>
    <property type="chains" value="X=1808-2136"/>
</dbReference>
<dbReference type="PDB" id="3JCR">
    <property type="method" value="EM"/>
    <property type="resolution" value="7.00 A"/>
    <property type="chains" value="C=1-2136"/>
</dbReference>
<dbReference type="PDB" id="4F91">
    <property type="method" value="X-ray"/>
    <property type="resolution" value="2.70 A"/>
    <property type="chains" value="B=402-2125"/>
</dbReference>
<dbReference type="PDB" id="4F92">
    <property type="method" value="X-ray"/>
    <property type="resolution" value="2.66 A"/>
    <property type="chains" value="B=402-2125"/>
</dbReference>
<dbReference type="PDB" id="4F93">
    <property type="method" value="X-ray"/>
    <property type="resolution" value="2.92 A"/>
    <property type="chains" value="B=402-2125"/>
</dbReference>
<dbReference type="PDB" id="4KIT">
    <property type="method" value="X-ray"/>
    <property type="resolution" value="3.60 A"/>
    <property type="chains" value="B=395-2129"/>
</dbReference>
<dbReference type="PDB" id="5O9Z">
    <property type="method" value="EM"/>
    <property type="resolution" value="4.50 A"/>
    <property type="chains" value="C=1-2136"/>
</dbReference>
<dbReference type="PDB" id="5URJ">
    <property type="method" value="X-ray"/>
    <property type="resolution" value="2.75 A"/>
    <property type="chains" value="A=395-2129"/>
</dbReference>
<dbReference type="PDB" id="5URK">
    <property type="method" value="X-ray"/>
    <property type="resolution" value="2.95 A"/>
    <property type="chains" value="A=395-2129"/>
</dbReference>
<dbReference type="PDB" id="5URM">
    <property type="method" value="X-ray"/>
    <property type="resolution" value="2.80 A"/>
    <property type="chains" value="A/B=395-2129"/>
</dbReference>
<dbReference type="PDB" id="5XJC">
    <property type="method" value="EM"/>
    <property type="resolution" value="3.60 A"/>
    <property type="chains" value="D=1-2136"/>
</dbReference>
<dbReference type="PDB" id="5YZG">
    <property type="method" value="EM"/>
    <property type="resolution" value="4.10 A"/>
    <property type="chains" value="D=1-2136"/>
</dbReference>
<dbReference type="PDB" id="5Z56">
    <property type="method" value="EM"/>
    <property type="resolution" value="5.10 A"/>
    <property type="chains" value="D=1-2136"/>
</dbReference>
<dbReference type="PDB" id="5Z57">
    <property type="method" value="EM"/>
    <property type="resolution" value="6.50 A"/>
    <property type="chains" value="D=1-2136"/>
</dbReference>
<dbReference type="PDB" id="5Z58">
    <property type="method" value="EM"/>
    <property type="resolution" value="4.90 A"/>
    <property type="chains" value="D=1-2136"/>
</dbReference>
<dbReference type="PDB" id="6AH0">
    <property type="method" value="EM"/>
    <property type="resolution" value="5.70 A"/>
    <property type="chains" value="D=1-2136"/>
</dbReference>
<dbReference type="PDB" id="6AHD">
    <property type="method" value="EM"/>
    <property type="resolution" value="3.80 A"/>
    <property type="chains" value="D=1-2136"/>
</dbReference>
<dbReference type="PDB" id="6FF7">
    <property type="method" value="EM"/>
    <property type="resolution" value="4.50 A"/>
    <property type="chains" value="r=1-2136"/>
</dbReference>
<dbReference type="PDB" id="6ICZ">
    <property type="method" value="EM"/>
    <property type="resolution" value="3.00 A"/>
    <property type="chains" value="D=1-2136"/>
</dbReference>
<dbReference type="PDB" id="6QDV">
    <property type="method" value="EM"/>
    <property type="resolution" value="3.30 A"/>
    <property type="chains" value="B=404-2125"/>
</dbReference>
<dbReference type="PDB" id="6QW6">
    <property type="method" value="EM"/>
    <property type="resolution" value="2.92 A"/>
    <property type="chains" value="5B=1-2136"/>
</dbReference>
<dbReference type="PDB" id="6QX9">
    <property type="method" value="EM"/>
    <property type="resolution" value="3.28 A"/>
    <property type="chains" value="5B=1-2136"/>
</dbReference>
<dbReference type="PDB" id="6S8O">
    <property type="method" value="X-ray"/>
    <property type="resolution" value="3.17 A"/>
    <property type="chains" value="B=394-2136"/>
</dbReference>
<dbReference type="PDB" id="6S8Q">
    <property type="method" value="X-ray"/>
    <property type="resolution" value="2.39 A"/>
    <property type="chains" value="B=394-2136"/>
</dbReference>
<dbReference type="PDB" id="6S9I">
    <property type="method" value="X-ray"/>
    <property type="resolution" value="2.60 A"/>
    <property type="chains" value="B=394-2136"/>
</dbReference>
<dbReference type="PDB" id="7A5P">
    <property type="method" value="EM"/>
    <property type="resolution" value="5.00 A"/>
    <property type="chains" value="q=1-2136"/>
</dbReference>
<dbReference type="PDB" id="7ABG">
    <property type="method" value="EM"/>
    <property type="resolution" value="7.80 A"/>
    <property type="chains" value="s=1-2136"/>
</dbReference>
<dbReference type="PDB" id="7ABI">
    <property type="method" value="EM"/>
    <property type="resolution" value="8.00 A"/>
    <property type="chains" value="s=1-2136"/>
</dbReference>
<dbReference type="PDB" id="7BDI">
    <property type="method" value="X-ray"/>
    <property type="resolution" value="2.80 A"/>
    <property type="chains" value="B=394-2136"/>
</dbReference>
<dbReference type="PDB" id="7BDJ">
    <property type="method" value="X-ray"/>
    <property type="resolution" value="2.59 A"/>
    <property type="chains" value="B=394-2136"/>
</dbReference>
<dbReference type="PDB" id="7BDK">
    <property type="method" value="X-ray"/>
    <property type="resolution" value="2.52 A"/>
    <property type="chains" value="B=394-2136"/>
</dbReference>
<dbReference type="PDB" id="7BDL">
    <property type="method" value="X-ray"/>
    <property type="resolution" value="2.69 A"/>
    <property type="chains" value="B=394-2136"/>
</dbReference>
<dbReference type="PDB" id="7DVQ">
    <property type="method" value="EM"/>
    <property type="resolution" value="2.89 A"/>
    <property type="chains" value="D=1-2136"/>
</dbReference>
<dbReference type="PDB" id="7OS1">
    <property type="method" value="EM"/>
    <property type="resolution" value="3.30 A"/>
    <property type="chains" value="B=395-2129"/>
</dbReference>
<dbReference type="PDB" id="7OS2">
    <property type="method" value="EM"/>
    <property type="resolution" value="2.76 A"/>
    <property type="chains" value="B=395-2129"/>
</dbReference>
<dbReference type="PDB" id="7PX3">
    <property type="method" value="EM"/>
    <property type="resolution" value="3.05 A"/>
    <property type="chains" value="B=394-2136"/>
</dbReference>
<dbReference type="PDB" id="7W5B">
    <property type="method" value="EM"/>
    <property type="resolution" value="4.30 A"/>
    <property type="chains" value="D=1-2136"/>
</dbReference>
<dbReference type="PDB" id="8BC8">
    <property type="method" value="X-ray"/>
    <property type="resolution" value="2.39 A"/>
    <property type="chains" value="B=394-2136"/>
</dbReference>
<dbReference type="PDB" id="8BC9">
    <property type="method" value="X-ray"/>
    <property type="resolution" value="2.30 A"/>
    <property type="chains" value="B=394-2136"/>
</dbReference>
<dbReference type="PDB" id="8BCA">
    <property type="method" value="X-ray"/>
    <property type="resolution" value="2.80 A"/>
    <property type="chains" value="B=394-2136"/>
</dbReference>
<dbReference type="PDB" id="8BCB">
    <property type="method" value="X-ray"/>
    <property type="resolution" value="2.38 A"/>
    <property type="chains" value="B=394-2136"/>
</dbReference>
<dbReference type="PDB" id="8BCC">
    <property type="method" value="X-ray"/>
    <property type="resolution" value="2.35 A"/>
    <property type="chains" value="B=394-2136"/>
</dbReference>
<dbReference type="PDB" id="8BCD">
    <property type="method" value="X-ray"/>
    <property type="resolution" value="3.50 A"/>
    <property type="chains" value="B=394-2136"/>
</dbReference>
<dbReference type="PDB" id="8BCE">
    <property type="method" value="X-ray"/>
    <property type="resolution" value="2.05 A"/>
    <property type="chains" value="B=394-2136"/>
</dbReference>
<dbReference type="PDB" id="8BCF">
    <property type="method" value="X-ray"/>
    <property type="resolution" value="2.42 A"/>
    <property type="chains" value="B=394-2136"/>
</dbReference>
<dbReference type="PDB" id="8BCG">
    <property type="method" value="X-ray"/>
    <property type="resolution" value="2.39 A"/>
    <property type="chains" value="B=394-2136"/>
</dbReference>
<dbReference type="PDB" id="8BCH">
    <property type="method" value="X-ray"/>
    <property type="resolution" value="2.87 A"/>
    <property type="chains" value="B=394-2136"/>
</dbReference>
<dbReference type="PDB" id="8C6J">
    <property type="method" value="EM"/>
    <property type="resolution" value="2.80 A"/>
    <property type="chains" value="B=1-2136"/>
</dbReference>
<dbReference type="PDB" id="8CH6">
    <property type="method" value="EM"/>
    <property type="resolution" value="5.90 A"/>
    <property type="chains" value="c=1-2136"/>
</dbReference>
<dbReference type="PDB" id="8H6E">
    <property type="method" value="EM"/>
    <property type="resolution" value="3.20 A"/>
    <property type="chains" value="5D=1-2136"/>
</dbReference>
<dbReference type="PDB" id="8H6J">
    <property type="method" value="EM"/>
    <property type="resolution" value="3.25 A"/>
    <property type="chains" value="5D=1-2136"/>
</dbReference>
<dbReference type="PDB" id="8H6K">
    <property type="method" value="EM"/>
    <property type="resolution" value="2.70 A"/>
    <property type="chains" value="5D=1-2136"/>
</dbReference>
<dbReference type="PDB" id="8H6L">
    <property type="method" value="EM"/>
    <property type="resolution" value="2.60 A"/>
    <property type="chains" value="5D=1-2136"/>
</dbReference>
<dbReference type="PDB" id="8I0P">
    <property type="method" value="EM"/>
    <property type="resolution" value="3.40 A"/>
    <property type="chains" value="D=1-2136"/>
</dbReference>
<dbReference type="PDB" id="8I0R">
    <property type="method" value="EM"/>
    <property type="resolution" value="3.00 A"/>
    <property type="chains" value="D=1-2136"/>
</dbReference>
<dbReference type="PDB" id="8I0S">
    <property type="method" value="EM"/>
    <property type="resolution" value="4.20 A"/>
    <property type="chains" value="D=1-2136"/>
</dbReference>
<dbReference type="PDB" id="8I0T">
    <property type="method" value="EM"/>
    <property type="resolution" value="3.00 A"/>
    <property type="chains" value="D=1-2136"/>
</dbReference>
<dbReference type="PDB" id="8I0W">
    <property type="method" value="EM"/>
    <property type="resolution" value="3.40 A"/>
    <property type="chains" value="D=1-2136"/>
</dbReference>
<dbReference type="PDB" id="8Q7Q">
    <property type="method" value="EM"/>
    <property type="resolution" value="3.20 A"/>
    <property type="chains" value="B=1-2136"/>
</dbReference>
<dbReference type="PDB" id="8Q7V">
    <property type="method" value="EM"/>
    <property type="resolution" value="3.80 A"/>
    <property type="chains" value="B=1-2136"/>
</dbReference>
<dbReference type="PDB" id="8Q7W">
    <property type="method" value="EM"/>
    <property type="resolution" value="3.90 A"/>
    <property type="chains" value="B=1-2136"/>
</dbReference>
<dbReference type="PDB" id="8Q7X">
    <property type="method" value="EM"/>
    <property type="resolution" value="4.60 A"/>
    <property type="chains" value="B=1-2136"/>
</dbReference>
<dbReference type="PDB" id="8Q91">
    <property type="method" value="EM"/>
    <property type="resolution" value="3.10 A"/>
    <property type="chains" value="B=1-2136"/>
</dbReference>
<dbReference type="PDB" id="8QO9">
    <property type="method" value="EM"/>
    <property type="resolution" value="5.29 A"/>
    <property type="chains" value="B=1-2136"/>
</dbReference>
<dbReference type="PDB" id="8QOZ">
    <property type="method" value="EM"/>
    <property type="resolution" value="3.10 A"/>
    <property type="chains" value="B=1-160"/>
</dbReference>
<dbReference type="PDB" id="8QP9">
    <property type="method" value="EM"/>
    <property type="resolution" value="4.10 A"/>
    <property type="chains" value="B=1-2136"/>
</dbReference>
<dbReference type="PDB" id="8QPA">
    <property type="method" value="EM"/>
    <property type="resolution" value="3.70 A"/>
    <property type="chains" value="B=1-2136"/>
</dbReference>
<dbReference type="PDB" id="8QPB">
    <property type="method" value="EM"/>
    <property type="resolution" value="3.70 A"/>
    <property type="chains" value="B=1-2136"/>
</dbReference>
<dbReference type="PDB" id="8QPK">
    <property type="method" value="EM"/>
    <property type="resolution" value="4.20 A"/>
    <property type="chains" value="B=1-2136"/>
</dbReference>
<dbReference type="PDB" id="8QXD">
    <property type="method" value="EM"/>
    <property type="resolution" value="9.60 A"/>
    <property type="chains" value="B=1-2136"/>
</dbReference>
<dbReference type="PDB" id="8QZS">
    <property type="method" value="EM"/>
    <property type="resolution" value="4.10 A"/>
    <property type="chains" value="B=1-2136"/>
</dbReference>
<dbReference type="PDB" id="8R08">
    <property type="method" value="EM"/>
    <property type="resolution" value="6.10 A"/>
    <property type="chains" value="B=1-2136"/>
</dbReference>
<dbReference type="PDB" id="8R09">
    <property type="method" value="EM"/>
    <property type="resolution" value="4.30 A"/>
    <property type="chains" value="B=1-2136"/>
</dbReference>
<dbReference type="PDB" id="8R0A">
    <property type="method" value="EM"/>
    <property type="resolution" value="5.80 A"/>
    <property type="chains" value="B=1-2136"/>
</dbReference>
<dbReference type="PDB" id="8R0B">
    <property type="method" value="EM"/>
    <property type="resolution" value="4.40 A"/>
    <property type="chains" value="B=1-2136"/>
</dbReference>
<dbReference type="PDB" id="8RC0">
    <property type="method" value="EM"/>
    <property type="resolution" value="3.20 A"/>
    <property type="chains" value="B=1-2136"/>
</dbReference>
<dbReference type="PDB" id="8RM5">
    <property type="method" value="EM"/>
    <property type="resolution" value="6.90 A"/>
    <property type="chains" value="B=1-2136"/>
</dbReference>
<dbReference type="PDB" id="8Y6O">
    <property type="method" value="EM"/>
    <property type="resolution" value="3.38 A"/>
    <property type="chains" value="E=1-2136"/>
</dbReference>
<dbReference type="PDB" id="9FMD">
    <property type="method" value="EM"/>
    <property type="resolution" value="3.30 A"/>
    <property type="chains" value="B=1-2136"/>
</dbReference>
<dbReference type="PDBsum" id="2Q0Z"/>
<dbReference type="PDBsum" id="3JCR"/>
<dbReference type="PDBsum" id="4F91"/>
<dbReference type="PDBsum" id="4F92"/>
<dbReference type="PDBsum" id="4F93"/>
<dbReference type="PDBsum" id="4KIT"/>
<dbReference type="PDBsum" id="5O9Z"/>
<dbReference type="PDBsum" id="5URJ"/>
<dbReference type="PDBsum" id="5URK"/>
<dbReference type="PDBsum" id="5URM"/>
<dbReference type="PDBsum" id="5XJC"/>
<dbReference type="PDBsum" id="5YZG"/>
<dbReference type="PDBsum" id="5Z56"/>
<dbReference type="PDBsum" id="5Z57"/>
<dbReference type="PDBsum" id="5Z58"/>
<dbReference type="PDBsum" id="6AH0"/>
<dbReference type="PDBsum" id="6AHD"/>
<dbReference type="PDBsum" id="6FF7"/>
<dbReference type="PDBsum" id="6ICZ"/>
<dbReference type="PDBsum" id="6QDV"/>
<dbReference type="PDBsum" id="6QW6"/>
<dbReference type="PDBsum" id="6QX9"/>
<dbReference type="PDBsum" id="6S8O"/>
<dbReference type="PDBsum" id="6S8Q"/>
<dbReference type="PDBsum" id="6S9I"/>
<dbReference type="PDBsum" id="7A5P"/>
<dbReference type="PDBsum" id="7ABG"/>
<dbReference type="PDBsum" id="7ABI"/>
<dbReference type="PDBsum" id="7BDI"/>
<dbReference type="PDBsum" id="7BDJ"/>
<dbReference type="PDBsum" id="7BDK"/>
<dbReference type="PDBsum" id="7BDL"/>
<dbReference type="PDBsum" id="7DVQ"/>
<dbReference type="PDBsum" id="7OS1"/>
<dbReference type="PDBsum" id="7OS2"/>
<dbReference type="PDBsum" id="7PX3"/>
<dbReference type="PDBsum" id="7W5B"/>
<dbReference type="PDBsum" id="8BC8"/>
<dbReference type="PDBsum" id="8BC9"/>
<dbReference type="PDBsum" id="8BCA"/>
<dbReference type="PDBsum" id="8BCB"/>
<dbReference type="PDBsum" id="8BCC"/>
<dbReference type="PDBsum" id="8BCD"/>
<dbReference type="PDBsum" id="8BCE"/>
<dbReference type="PDBsum" id="8BCF"/>
<dbReference type="PDBsum" id="8BCG"/>
<dbReference type="PDBsum" id="8BCH"/>
<dbReference type="PDBsum" id="8C6J"/>
<dbReference type="PDBsum" id="8CH6"/>
<dbReference type="PDBsum" id="8H6E"/>
<dbReference type="PDBsum" id="8H6J"/>
<dbReference type="PDBsum" id="8H6K"/>
<dbReference type="PDBsum" id="8H6L"/>
<dbReference type="PDBsum" id="8I0P"/>
<dbReference type="PDBsum" id="8I0R"/>
<dbReference type="PDBsum" id="8I0S"/>
<dbReference type="PDBsum" id="8I0T"/>
<dbReference type="PDBsum" id="8I0W"/>
<dbReference type="PDBsum" id="8Q7Q"/>
<dbReference type="PDBsum" id="8Q7V"/>
<dbReference type="PDBsum" id="8Q7W"/>
<dbReference type="PDBsum" id="8Q7X"/>
<dbReference type="PDBsum" id="8Q91"/>
<dbReference type="PDBsum" id="8QO9"/>
<dbReference type="PDBsum" id="8QOZ"/>
<dbReference type="PDBsum" id="8QP9"/>
<dbReference type="PDBsum" id="8QPA"/>
<dbReference type="PDBsum" id="8QPB"/>
<dbReference type="PDBsum" id="8QPK"/>
<dbReference type="PDBsum" id="8QXD"/>
<dbReference type="PDBsum" id="8QZS"/>
<dbReference type="PDBsum" id="8R08"/>
<dbReference type="PDBsum" id="8R09"/>
<dbReference type="PDBsum" id="8R0A"/>
<dbReference type="PDBsum" id="8R0B"/>
<dbReference type="PDBsum" id="8RC0"/>
<dbReference type="PDBsum" id="8RM5"/>
<dbReference type="PDBsum" id="8Y6O"/>
<dbReference type="PDBsum" id="9FMD"/>
<dbReference type="EMDB" id="EMD-11695"/>
<dbReference type="EMDB" id="EMD-11697"/>
<dbReference type="EMDB" id="EMD-13045"/>
<dbReference type="EMDB" id="EMD-13046"/>
<dbReference type="EMDB" id="EMD-13690"/>
<dbReference type="EMDB" id="EMD-16452"/>
<dbReference type="EMDB" id="EMD-16658"/>
<dbReference type="EMDB" id="EMD-18229"/>
<dbReference type="EMDB" id="EMD-18234"/>
<dbReference type="EMDB" id="EMD-18235"/>
<dbReference type="EMDB" id="EMD-18237"/>
<dbReference type="EMDB" id="EMD-18267"/>
<dbReference type="EMDB" id="EMD-18529"/>
<dbReference type="EMDB" id="EMD-18542"/>
<dbReference type="EMDB" id="EMD-18545"/>
<dbReference type="EMDB" id="EMD-18546"/>
<dbReference type="EMDB" id="EMD-18547"/>
<dbReference type="EMDB" id="EMD-18555"/>
<dbReference type="EMDB" id="EMD-18718"/>
<dbReference type="EMDB" id="EMD-18781"/>
<dbReference type="EMDB" id="EMD-18786"/>
<dbReference type="EMDB" id="EMD-18787"/>
<dbReference type="EMDB" id="EMD-18788"/>
<dbReference type="EMDB" id="EMD-18789"/>
<dbReference type="EMDB" id="EMD-19041"/>
<dbReference type="EMDB" id="EMD-19349"/>
<dbReference type="EMDB" id="EMD-30875"/>
<dbReference type="EMDB" id="EMD-32321"/>
<dbReference type="EMDB" id="EMD-34500"/>
<dbReference type="EMDB" id="EMD-34505"/>
<dbReference type="EMDB" id="EMD-34507"/>
<dbReference type="EMDB" id="EMD-34508"/>
<dbReference type="EMDB" id="EMD-35105"/>
<dbReference type="EMDB" id="EMD-35107"/>
<dbReference type="EMDB" id="EMD-35108"/>
<dbReference type="EMDB" id="EMD-35109"/>
<dbReference type="EMDB" id="EMD-35113"/>
<dbReference type="EMDB" id="EMD-3766"/>
<dbReference type="EMDB" id="EMD-38993"/>
<dbReference type="EMDB" id="EMD-4525"/>
<dbReference type="EMDB" id="EMD-4658"/>
<dbReference type="EMDB" id="EMD-4665"/>
<dbReference type="EMDB" id="EMD-6721"/>
<dbReference type="EMDB" id="EMD-6864"/>
<dbReference type="EMDB" id="EMD-6889"/>
<dbReference type="EMDB" id="EMD-6890"/>
<dbReference type="EMDB" id="EMD-6891"/>
<dbReference type="EMDB" id="EMD-9621"/>
<dbReference type="EMDB" id="EMD-9624"/>
<dbReference type="EMDB" id="EMD-9645"/>
<dbReference type="SMR" id="O75643"/>
<dbReference type="BioGRID" id="116661">
    <property type="interactions" value="464"/>
</dbReference>
<dbReference type="ComplexPortal" id="CPX-2391">
    <property type="entry name" value="U4/U6.U5 small nuclear ribonucleoprotein complex"/>
</dbReference>
<dbReference type="CORUM" id="O75643"/>
<dbReference type="DIP" id="DIP-31659N"/>
<dbReference type="FunCoup" id="O75643">
    <property type="interactions" value="4155"/>
</dbReference>
<dbReference type="IntAct" id="O75643">
    <property type="interactions" value="183"/>
</dbReference>
<dbReference type="MINT" id="O75643"/>
<dbReference type="STRING" id="9606.ENSP00000317123"/>
<dbReference type="BindingDB" id="O75643"/>
<dbReference type="ChEMBL" id="CHEMBL4105972"/>
<dbReference type="DrugCentral" id="O75643"/>
<dbReference type="CarbonylDB" id="O75643"/>
<dbReference type="GlyCosmos" id="O75643">
    <property type="glycosylation" value="1 site, 1 glycan"/>
</dbReference>
<dbReference type="GlyGen" id="O75643">
    <property type="glycosylation" value="10 sites, 1 O-linked glycan (10 sites)"/>
</dbReference>
<dbReference type="iPTMnet" id="O75643"/>
<dbReference type="MetOSite" id="O75643"/>
<dbReference type="PhosphoSitePlus" id="O75643"/>
<dbReference type="SwissPalm" id="O75643"/>
<dbReference type="BioMuta" id="SNRNP200"/>
<dbReference type="jPOST" id="O75643"/>
<dbReference type="MassIVE" id="O75643"/>
<dbReference type="PaxDb" id="9606-ENSP00000317123"/>
<dbReference type="PeptideAtlas" id="O75643"/>
<dbReference type="ProteomicsDB" id="50136">
    <molecule id="O75643-1"/>
</dbReference>
<dbReference type="ProteomicsDB" id="50137">
    <molecule id="O75643-2"/>
</dbReference>
<dbReference type="Pumba" id="O75643"/>
<dbReference type="Antibodypedia" id="32425">
    <property type="antibodies" value="78 antibodies from 21 providers"/>
</dbReference>
<dbReference type="DNASU" id="23020"/>
<dbReference type="Ensembl" id="ENST00000323853.10">
    <molecule id="O75643-1"/>
    <property type="protein sequence ID" value="ENSP00000317123.5"/>
    <property type="gene ID" value="ENSG00000144028.15"/>
</dbReference>
<dbReference type="GeneID" id="23020"/>
<dbReference type="KEGG" id="hsa:23020"/>
<dbReference type="MANE-Select" id="ENST00000323853.10">
    <property type="protein sequence ID" value="ENSP00000317123.5"/>
    <property type="RefSeq nucleotide sequence ID" value="NM_014014.5"/>
    <property type="RefSeq protein sequence ID" value="NP_054733.2"/>
</dbReference>
<dbReference type="UCSC" id="uc002svu.4">
    <molecule id="O75643-1"/>
    <property type="organism name" value="human"/>
</dbReference>
<dbReference type="AGR" id="HGNC:30859"/>
<dbReference type="CTD" id="23020"/>
<dbReference type="DisGeNET" id="23020"/>
<dbReference type="GeneCards" id="SNRNP200"/>
<dbReference type="GeneReviews" id="SNRNP200"/>
<dbReference type="HGNC" id="HGNC:30859">
    <property type="gene designation" value="SNRNP200"/>
</dbReference>
<dbReference type="HPA" id="ENSG00000144028">
    <property type="expression patterns" value="Low tissue specificity"/>
</dbReference>
<dbReference type="MalaCards" id="SNRNP200"/>
<dbReference type="MIM" id="601664">
    <property type="type" value="gene"/>
</dbReference>
<dbReference type="MIM" id="610359">
    <property type="type" value="phenotype"/>
</dbReference>
<dbReference type="neXtProt" id="NX_O75643"/>
<dbReference type="OpenTargets" id="ENSG00000144028"/>
<dbReference type="Orphanet" id="791">
    <property type="disease" value="Retinitis pigmentosa"/>
</dbReference>
<dbReference type="PharmGKB" id="PA164726004"/>
<dbReference type="VEuPathDB" id="HostDB:ENSG00000144028"/>
<dbReference type="eggNOG" id="KOG0951">
    <property type="taxonomic scope" value="Eukaryota"/>
</dbReference>
<dbReference type="GeneTree" id="ENSGT00940000154966"/>
<dbReference type="HOGENOM" id="CLU_000335_2_1_1"/>
<dbReference type="InParanoid" id="O75643"/>
<dbReference type="OMA" id="MNPKEFN"/>
<dbReference type="OrthoDB" id="5575at2759"/>
<dbReference type="PAN-GO" id="O75643">
    <property type="GO annotations" value="3 GO annotations based on evolutionary models"/>
</dbReference>
<dbReference type="PhylomeDB" id="O75643"/>
<dbReference type="TreeFam" id="TF300056"/>
<dbReference type="BRENDA" id="3.6.4.13">
    <property type="organism ID" value="2681"/>
</dbReference>
<dbReference type="PathwayCommons" id="O75643"/>
<dbReference type="Reactome" id="R-HSA-72163">
    <property type="pathway name" value="mRNA Splicing - Major Pathway"/>
</dbReference>
<dbReference type="Reactome" id="R-HSA-72165">
    <property type="pathway name" value="mRNA Splicing - Minor Pathway"/>
</dbReference>
<dbReference type="SignaLink" id="O75643"/>
<dbReference type="SIGNOR" id="O75643"/>
<dbReference type="BioGRID-ORCS" id="23020">
    <property type="hits" value="826 hits in 1163 CRISPR screens"/>
</dbReference>
<dbReference type="CD-CODE" id="804901D1">
    <property type="entry name" value="Nuclear speckle"/>
</dbReference>
<dbReference type="CD-CODE" id="91857CE7">
    <property type="entry name" value="Nucleolus"/>
</dbReference>
<dbReference type="ChiTaRS" id="SNRNP200">
    <property type="organism name" value="human"/>
</dbReference>
<dbReference type="EvolutionaryTrace" id="O75643"/>
<dbReference type="GeneWiki" id="ASCC3L1"/>
<dbReference type="GenomeRNAi" id="23020"/>
<dbReference type="Pharos" id="O75643">
    <property type="development level" value="Tchem"/>
</dbReference>
<dbReference type="PRO" id="PR:O75643"/>
<dbReference type="Proteomes" id="UP000005640">
    <property type="component" value="Chromosome 2"/>
</dbReference>
<dbReference type="RNAct" id="O75643">
    <property type="molecule type" value="protein"/>
</dbReference>
<dbReference type="Bgee" id="ENSG00000144028">
    <property type="expression patterns" value="Expressed in ventricular zone and 213 other cell types or tissues"/>
</dbReference>
<dbReference type="ExpressionAtlas" id="O75643">
    <property type="expression patterns" value="baseline and differential"/>
</dbReference>
<dbReference type="GO" id="GO:0071013">
    <property type="term" value="C:catalytic step 2 spliceosome"/>
    <property type="evidence" value="ECO:0000314"/>
    <property type="project" value="UniProtKB"/>
</dbReference>
<dbReference type="GO" id="GO:0005929">
    <property type="term" value="C:cilium"/>
    <property type="evidence" value="ECO:0000314"/>
    <property type="project" value="HPA"/>
</dbReference>
<dbReference type="GO" id="GO:0016020">
    <property type="term" value="C:membrane"/>
    <property type="evidence" value="ECO:0007005"/>
    <property type="project" value="UniProtKB"/>
</dbReference>
<dbReference type="GO" id="GO:0005654">
    <property type="term" value="C:nucleoplasm"/>
    <property type="evidence" value="ECO:0000314"/>
    <property type="project" value="HPA"/>
</dbReference>
<dbReference type="GO" id="GO:0005634">
    <property type="term" value="C:nucleus"/>
    <property type="evidence" value="ECO:0000314"/>
    <property type="project" value="UniProtKB"/>
</dbReference>
<dbReference type="GO" id="GO:0005886">
    <property type="term" value="C:plasma membrane"/>
    <property type="evidence" value="ECO:0000314"/>
    <property type="project" value="HPA"/>
</dbReference>
<dbReference type="GO" id="GO:0005681">
    <property type="term" value="C:spliceosomal complex"/>
    <property type="evidence" value="ECO:0000314"/>
    <property type="project" value="UniProtKB"/>
</dbReference>
<dbReference type="GO" id="GO:0071006">
    <property type="term" value="C:U2-type catalytic step 1 spliceosome"/>
    <property type="evidence" value="ECO:0000314"/>
    <property type="project" value="UniProtKB"/>
</dbReference>
<dbReference type="GO" id="GO:0071005">
    <property type="term" value="C:U2-type precatalytic spliceosome"/>
    <property type="evidence" value="ECO:0000314"/>
    <property type="project" value="UniProtKB"/>
</dbReference>
<dbReference type="GO" id="GO:0046540">
    <property type="term" value="C:U4/U6 x U5 tri-snRNP complex"/>
    <property type="evidence" value="ECO:0000314"/>
    <property type="project" value="CAFA"/>
</dbReference>
<dbReference type="GO" id="GO:0005682">
    <property type="term" value="C:U5 snRNP"/>
    <property type="evidence" value="ECO:0000314"/>
    <property type="project" value="HGNC-UCL"/>
</dbReference>
<dbReference type="GO" id="GO:0005524">
    <property type="term" value="F:ATP binding"/>
    <property type="evidence" value="ECO:0007669"/>
    <property type="project" value="UniProtKB-KW"/>
</dbReference>
<dbReference type="GO" id="GO:0016887">
    <property type="term" value="F:ATP hydrolysis activity"/>
    <property type="evidence" value="ECO:0007669"/>
    <property type="project" value="RHEA"/>
</dbReference>
<dbReference type="GO" id="GO:0004386">
    <property type="term" value="F:helicase activity"/>
    <property type="evidence" value="ECO:0000314"/>
    <property type="project" value="HGNC-UCL"/>
</dbReference>
<dbReference type="GO" id="GO:0042802">
    <property type="term" value="F:identical protein binding"/>
    <property type="evidence" value="ECO:0000353"/>
    <property type="project" value="IntAct"/>
</dbReference>
<dbReference type="GO" id="GO:0003723">
    <property type="term" value="F:RNA binding"/>
    <property type="evidence" value="ECO:0007005"/>
    <property type="project" value="UniProtKB"/>
</dbReference>
<dbReference type="GO" id="GO:0003724">
    <property type="term" value="F:RNA helicase activity"/>
    <property type="evidence" value="ECO:0000314"/>
    <property type="project" value="UniProtKB"/>
</dbReference>
<dbReference type="GO" id="GO:0000354">
    <property type="term" value="P:cis assembly of pre-catalytic spliceosome"/>
    <property type="evidence" value="ECO:0000305"/>
    <property type="project" value="HGNC-UCL"/>
</dbReference>
<dbReference type="GO" id="GO:0000398">
    <property type="term" value="P:mRNA splicing, via spliceosome"/>
    <property type="evidence" value="ECO:0000314"/>
    <property type="project" value="UniProtKB"/>
</dbReference>
<dbReference type="GO" id="GO:0001649">
    <property type="term" value="P:osteoblast differentiation"/>
    <property type="evidence" value="ECO:0007005"/>
    <property type="project" value="UniProtKB"/>
</dbReference>
<dbReference type="GO" id="GO:0000388">
    <property type="term" value="P:spliceosome conformational change to release U4 (or U4atac) and U1 (or U11)"/>
    <property type="evidence" value="ECO:0000314"/>
    <property type="project" value="UniProtKB"/>
</dbReference>
<dbReference type="CDD" id="cd18019">
    <property type="entry name" value="DEXHc_Brr2_1"/>
    <property type="match status" value="1"/>
</dbReference>
<dbReference type="CDD" id="cd18021">
    <property type="entry name" value="DEXHc_Brr2_2"/>
    <property type="match status" value="1"/>
</dbReference>
<dbReference type="CDD" id="cd18795">
    <property type="entry name" value="SF2_C_Ski2"/>
    <property type="match status" value="2"/>
</dbReference>
<dbReference type="FunFam" id="2.60.40.150:FF:000004">
    <property type="entry name" value="RNA helicase, activating signal cointegrator 1"/>
    <property type="match status" value="1"/>
</dbReference>
<dbReference type="FunFam" id="1.10.3380.10:FF:000004">
    <property type="entry name" value="U5 small nuclear ribonucleoprotein 200 kDa helicase"/>
    <property type="match status" value="1"/>
</dbReference>
<dbReference type="FunFam" id="2.60.40.150:FF:000048">
    <property type="entry name" value="U5 small nuclear ribonucleoprotein 200 kDa helicase"/>
    <property type="match status" value="1"/>
</dbReference>
<dbReference type="FunFam" id="3.40.50.300:FF:000368">
    <property type="entry name" value="U5 small nuclear ribonucleoprotein 200 kDa helicase"/>
    <property type="match status" value="1"/>
</dbReference>
<dbReference type="FunFam" id="3.40.50.300:FF:003287">
    <property type="entry name" value="U5 small nuclear ribonucleoprotein 200 kDa helicase"/>
    <property type="match status" value="1"/>
</dbReference>
<dbReference type="FunFam" id="1.10.10.10:FF:000012">
    <property type="entry name" value="U5 small nuclear ribonucleoprotein helicase"/>
    <property type="match status" value="1"/>
</dbReference>
<dbReference type="FunFam" id="1.10.10.10:FF:000024">
    <property type="entry name" value="U5 small nuclear ribonucleoprotein helicase"/>
    <property type="match status" value="1"/>
</dbReference>
<dbReference type="FunFam" id="1.10.150.20:FF:000004">
    <property type="entry name" value="U5 small nuclear ribonucleoprotein helicase"/>
    <property type="match status" value="1"/>
</dbReference>
<dbReference type="FunFam" id="1.10.3380.10:FF:000001">
    <property type="entry name" value="U5 small nuclear ribonucleoprotein helicase"/>
    <property type="match status" value="1"/>
</dbReference>
<dbReference type="FunFam" id="3.40.50.300:FF:000062">
    <property type="entry name" value="U5 small nuclear ribonucleoprotein helicase"/>
    <property type="match status" value="1"/>
</dbReference>
<dbReference type="FunFam" id="3.40.50.300:FF:000254">
    <property type="entry name" value="U5 small nuclear ribonucleoprotein helicase"/>
    <property type="match status" value="1"/>
</dbReference>
<dbReference type="FunFam" id="1.10.150.20:FF:000013">
    <property type="entry name" value="U5 small nuclear ribonucleoprotein kDa helicase"/>
    <property type="match status" value="1"/>
</dbReference>
<dbReference type="Gene3D" id="1.10.150.20">
    <property type="entry name" value="5' to 3' exonuclease, C-terminal subdomain"/>
    <property type="match status" value="2"/>
</dbReference>
<dbReference type="Gene3D" id="2.60.40.150">
    <property type="entry name" value="C2 domain"/>
    <property type="match status" value="2"/>
</dbReference>
<dbReference type="Gene3D" id="3.40.50.300">
    <property type="entry name" value="P-loop containing nucleotide triphosphate hydrolases"/>
    <property type="match status" value="4"/>
</dbReference>
<dbReference type="Gene3D" id="1.10.3380.10">
    <property type="entry name" value="Sec63 N-terminal domain-like domain"/>
    <property type="match status" value="2"/>
</dbReference>
<dbReference type="Gene3D" id="1.10.10.10">
    <property type="entry name" value="Winged helix-like DNA-binding domain superfamily/Winged helix DNA-binding domain"/>
    <property type="match status" value="2"/>
</dbReference>
<dbReference type="InterPro" id="IPR041094">
    <property type="entry name" value="Brr2_helicase_PWI"/>
</dbReference>
<dbReference type="InterPro" id="IPR048863">
    <property type="entry name" value="BRR2_plug"/>
</dbReference>
<dbReference type="InterPro" id="IPR035892">
    <property type="entry name" value="C2_domain_sf"/>
</dbReference>
<dbReference type="InterPro" id="IPR011545">
    <property type="entry name" value="DEAD/DEAH_box_helicase_dom"/>
</dbReference>
<dbReference type="InterPro" id="IPR050474">
    <property type="entry name" value="Hel308_SKI2-like"/>
</dbReference>
<dbReference type="InterPro" id="IPR014001">
    <property type="entry name" value="Helicase_ATP-bd"/>
</dbReference>
<dbReference type="InterPro" id="IPR001650">
    <property type="entry name" value="Helicase_C-like"/>
</dbReference>
<dbReference type="InterPro" id="IPR014756">
    <property type="entry name" value="Ig_E-set"/>
</dbReference>
<dbReference type="InterPro" id="IPR027417">
    <property type="entry name" value="P-loop_NTPase"/>
</dbReference>
<dbReference type="InterPro" id="IPR004179">
    <property type="entry name" value="Sec63-dom"/>
</dbReference>
<dbReference type="InterPro" id="IPR036388">
    <property type="entry name" value="WH-like_DNA-bd_sf"/>
</dbReference>
<dbReference type="InterPro" id="IPR036390">
    <property type="entry name" value="WH_DNA-bd_sf"/>
</dbReference>
<dbReference type="PANTHER" id="PTHR47961:SF4">
    <property type="entry name" value="ACTIVATING SIGNAL COINTEGRATOR 1 COMPLEX SUBUNIT 3"/>
    <property type="match status" value="1"/>
</dbReference>
<dbReference type="PANTHER" id="PTHR47961">
    <property type="entry name" value="DNA POLYMERASE THETA, PUTATIVE (AFU_ORTHOLOGUE AFUA_1G05260)-RELATED"/>
    <property type="match status" value="1"/>
</dbReference>
<dbReference type="Pfam" id="PF21188">
    <property type="entry name" value="BRR2_plug"/>
    <property type="match status" value="1"/>
</dbReference>
<dbReference type="Pfam" id="PF00270">
    <property type="entry name" value="DEAD"/>
    <property type="match status" value="2"/>
</dbReference>
<dbReference type="Pfam" id="PF00271">
    <property type="entry name" value="Helicase_C"/>
    <property type="match status" value="1"/>
</dbReference>
<dbReference type="Pfam" id="PF18149">
    <property type="entry name" value="Helicase_PWI"/>
    <property type="match status" value="1"/>
</dbReference>
<dbReference type="Pfam" id="PF02889">
    <property type="entry name" value="Sec63"/>
    <property type="match status" value="2"/>
</dbReference>
<dbReference type="Pfam" id="PF23445">
    <property type="entry name" value="SNRNP200_wHTH"/>
    <property type="match status" value="2"/>
</dbReference>
<dbReference type="PIRSF" id="PIRSF039073">
    <property type="entry name" value="BRR2"/>
    <property type="match status" value="1"/>
</dbReference>
<dbReference type="SMART" id="SM00487">
    <property type="entry name" value="DEXDc"/>
    <property type="match status" value="2"/>
</dbReference>
<dbReference type="SMART" id="SM00490">
    <property type="entry name" value="HELICc"/>
    <property type="match status" value="2"/>
</dbReference>
<dbReference type="SMART" id="SM00973">
    <property type="entry name" value="Sec63"/>
    <property type="match status" value="2"/>
</dbReference>
<dbReference type="SUPFAM" id="SSF81296">
    <property type="entry name" value="E set domains"/>
    <property type="match status" value="1"/>
</dbReference>
<dbReference type="SUPFAM" id="SSF52540">
    <property type="entry name" value="P-loop containing nucleoside triphosphate hydrolases"/>
    <property type="match status" value="4"/>
</dbReference>
<dbReference type="SUPFAM" id="SSF158702">
    <property type="entry name" value="Sec63 N-terminal domain-like"/>
    <property type="match status" value="2"/>
</dbReference>
<dbReference type="SUPFAM" id="SSF46785">
    <property type="entry name" value="Winged helix' DNA-binding domain"/>
    <property type="match status" value="2"/>
</dbReference>
<dbReference type="PROSITE" id="PS51192">
    <property type="entry name" value="HELICASE_ATP_BIND_1"/>
    <property type="match status" value="2"/>
</dbReference>
<dbReference type="PROSITE" id="PS51194">
    <property type="entry name" value="HELICASE_CTER"/>
    <property type="match status" value="2"/>
</dbReference>
<reference key="1">
    <citation type="journal article" date="2006" name="RNA">
        <title>The network of protein-protein interactions within the human U4/U6.U5 tri-snRNP.</title>
        <authorList>
            <person name="Liu S."/>
            <person name="Rauhut R."/>
            <person name="Vornlocher H.-P."/>
            <person name="Luehrmann R."/>
        </authorList>
    </citation>
    <scope>NUCLEOTIDE SEQUENCE [MRNA] (ISOFORM 1)</scope>
    <scope>FUNCTION</scope>
    <scope>SUBUNIT</scope>
    <scope>VARIANT RP33 LEU-1087</scope>
</reference>
<reference key="2">
    <citation type="journal article" date="2004" name="Nat. Genet.">
        <title>Complete sequencing and characterization of 21,243 full-length human cDNAs.</title>
        <authorList>
            <person name="Ota T."/>
            <person name="Suzuki Y."/>
            <person name="Nishikawa T."/>
            <person name="Otsuki T."/>
            <person name="Sugiyama T."/>
            <person name="Irie R."/>
            <person name="Wakamatsu A."/>
            <person name="Hayashi K."/>
            <person name="Sato H."/>
            <person name="Nagai K."/>
            <person name="Kimura K."/>
            <person name="Makita H."/>
            <person name="Sekine M."/>
            <person name="Obayashi M."/>
            <person name="Nishi T."/>
            <person name="Shibahara T."/>
            <person name="Tanaka T."/>
            <person name="Ishii S."/>
            <person name="Yamamoto J."/>
            <person name="Saito K."/>
            <person name="Kawai Y."/>
            <person name="Isono Y."/>
            <person name="Nakamura Y."/>
            <person name="Nagahari K."/>
            <person name="Murakami K."/>
            <person name="Yasuda T."/>
            <person name="Iwayanagi T."/>
            <person name="Wagatsuma M."/>
            <person name="Shiratori A."/>
            <person name="Sudo H."/>
            <person name="Hosoiri T."/>
            <person name="Kaku Y."/>
            <person name="Kodaira H."/>
            <person name="Kondo H."/>
            <person name="Sugawara M."/>
            <person name="Takahashi M."/>
            <person name="Kanda K."/>
            <person name="Yokoi T."/>
            <person name="Furuya T."/>
            <person name="Kikkawa E."/>
            <person name="Omura Y."/>
            <person name="Abe K."/>
            <person name="Kamihara K."/>
            <person name="Katsuta N."/>
            <person name="Sato K."/>
            <person name="Tanikawa M."/>
            <person name="Yamazaki M."/>
            <person name="Ninomiya K."/>
            <person name="Ishibashi T."/>
            <person name="Yamashita H."/>
            <person name="Murakawa K."/>
            <person name="Fujimori K."/>
            <person name="Tanai H."/>
            <person name="Kimata M."/>
            <person name="Watanabe M."/>
            <person name="Hiraoka S."/>
            <person name="Chiba Y."/>
            <person name="Ishida S."/>
            <person name="Ono Y."/>
            <person name="Takiguchi S."/>
            <person name="Watanabe S."/>
            <person name="Yosida M."/>
            <person name="Hotuta T."/>
            <person name="Kusano J."/>
            <person name="Kanehori K."/>
            <person name="Takahashi-Fujii A."/>
            <person name="Hara H."/>
            <person name="Tanase T.-O."/>
            <person name="Nomura Y."/>
            <person name="Togiya S."/>
            <person name="Komai F."/>
            <person name="Hara R."/>
            <person name="Takeuchi K."/>
            <person name="Arita M."/>
            <person name="Imose N."/>
            <person name="Musashino K."/>
            <person name="Yuuki H."/>
            <person name="Oshima A."/>
            <person name="Sasaki N."/>
            <person name="Aotsuka S."/>
            <person name="Yoshikawa Y."/>
            <person name="Matsunawa H."/>
            <person name="Ichihara T."/>
            <person name="Shiohata N."/>
            <person name="Sano S."/>
            <person name="Moriya S."/>
            <person name="Momiyama H."/>
            <person name="Satoh N."/>
            <person name="Takami S."/>
            <person name="Terashima Y."/>
            <person name="Suzuki O."/>
            <person name="Nakagawa S."/>
            <person name="Senoh A."/>
            <person name="Mizoguchi H."/>
            <person name="Goto Y."/>
            <person name="Shimizu F."/>
            <person name="Wakebe H."/>
            <person name="Hishigaki H."/>
            <person name="Watanabe T."/>
            <person name="Sugiyama A."/>
            <person name="Takemoto M."/>
            <person name="Kawakami B."/>
            <person name="Yamazaki M."/>
            <person name="Watanabe K."/>
            <person name="Kumagai A."/>
            <person name="Itakura S."/>
            <person name="Fukuzumi Y."/>
            <person name="Fujimori Y."/>
            <person name="Komiyama M."/>
            <person name="Tashiro H."/>
            <person name="Tanigami A."/>
            <person name="Fujiwara T."/>
            <person name="Ono T."/>
            <person name="Yamada K."/>
            <person name="Fujii Y."/>
            <person name="Ozaki K."/>
            <person name="Hirao M."/>
            <person name="Ohmori Y."/>
            <person name="Kawabata A."/>
            <person name="Hikiji T."/>
            <person name="Kobatake N."/>
            <person name="Inagaki H."/>
            <person name="Ikema Y."/>
            <person name="Okamoto S."/>
            <person name="Okitani R."/>
            <person name="Kawakami T."/>
            <person name="Noguchi S."/>
            <person name="Itoh T."/>
            <person name="Shigeta K."/>
            <person name="Senba T."/>
            <person name="Matsumura K."/>
            <person name="Nakajima Y."/>
            <person name="Mizuno T."/>
            <person name="Morinaga M."/>
            <person name="Sasaki M."/>
            <person name="Togashi T."/>
            <person name="Oyama M."/>
            <person name="Hata H."/>
            <person name="Watanabe M."/>
            <person name="Komatsu T."/>
            <person name="Mizushima-Sugano J."/>
            <person name="Satoh T."/>
            <person name="Shirai Y."/>
            <person name="Takahashi Y."/>
            <person name="Nakagawa K."/>
            <person name="Okumura K."/>
            <person name="Nagase T."/>
            <person name="Nomura N."/>
            <person name="Kikuchi H."/>
            <person name="Masuho Y."/>
            <person name="Yamashita R."/>
            <person name="Nakai K."/>
            <person name="Yada T."/>
            <person name="Nakamura Y."/>
            <person name="Ohara O."/>
            <person name="Isogai T."/>
            <person name="Sugano S."/>
        </authorList>
    </citation>
    <scope>NUCLEOTIDE SEQUENCE [LARGE SCALE MRNA] (ISOFORM 2)</scope>
    <scope>NUCLEOTIDE SEQUENCE [LARGE SCALE MRNA] OF 264-2136 (ISOFORM 1)</scope>
    <source>
        <tissue>Cerebellum</tissue>
        <tissue>Placenta</tissue>
    </source>
</reference>
<reference key="3">
    <citation type="journal article" date="1998" name="DNA Res.">
        <title>Prediction of the coding sequences of unidentified human genes. XI. The complete sequences of 100 new cDNA clones from brain which code for large proteins in vitro.</title>
        <authorList>
            <person name="Nagase T."/>
            <person name="Ishikawa K."/>
            <person name="Suyama M."/>
            <person name="Kikuno R."/>
            <person name="Miyajima N."/>
            <person name="Tanaka A."/>
            <person name="Kotani H."/>
            <person name="Nomura N."/>
            <person name="Ohara O."/>
        </authorList>
    </citation>
    <scope>NUCLEOTIDE SEQUENCE [LARGE SCALE MRNA] OF 111-2136 (ISOFORM 1)</scope>
    <source>
        <tissue>Brain</tissue>
    </source>
</reference>
<reference key="4">
    <citation type="journal article" date="2002" name="DNA Res.">
        <title>Construction of expression-ready cDNA clones for KIAA genes: manual curation of 330 KIAA cDNA clones.</title>
        <authorList>
            <person name="Nakajima D."/>
            <person name="Okazaki N."/>
            <person name="Yamakawa H."/>
            <person name="Kikuno R."/>
            <person name="Ohara O."/>
            <person name="Nagase T."/>
        </authorList>
    </citation>
    <scope>SEQUENCE REVISION</scope>
</reference>
<reference key="5">
    <citation type="journal article" date="1996" name="EMBO J.">
        <title>The HeLa 200 kDa U5 snRNP-specific protein and its homologue in Saccharomyces cerevisiae are members of the DEXH-box protein family of putative RNA helicases.</title>
        <authorList>
            <person name="Lauber J."/>
            <person name="Fabrizio P."/>
            <person name="Teigelkamp S."/>
            <person name="Lane W.S."/>
            <person name="Hartmann E."/>
            <person name="Luehrmann R."/>
        </authorList>
    </citation>
    <scope>NUCLEOTIDE SEQUENCE [GENOMIC DNA] OF 436-2136</scope>
    <scope>PROTEIN SEQUENCE OF 672-690; 1200-1213; 1295-1317; 1326-1338 AND 1717-1728</scope>
    <scope>FUNCTION</scope>
    <scope>SUBUNIT</scope>
    <source>
        <tissue>Fetal brain</tissue>
    </source>
</reference>
<reference key="6">
    <citation type="journal article" date="2004" name="Genome Res.">
        <title>The status, quality, and expansion of the NIH full-length cDNA project: the Mammalian Gene Collection (MGC).</title>
        <authorList>
            <consortium name="The MGC Project Team"/>
        </authorList>
    </citation>
    <scope>NUCLEOTIDE SEQUENCE [LARGE SCALE MRNA] OF 316-2136</scope>
    <source>
        <tissue>Placenta</tissue>
        <tissue>Skin</tissue>
    </source>
</reference>
<reference key="7">
    <citation type="journal article" date="1998" name="Proc. Natl. Acad. Sci. U.S.A.">
        <title>The human U5-200kD DEXH-box protein unwinds U4/U6 RNA duplices in vitro.</title>
        <authorList>
            <person name="Laggerbauer B."/>
            <person name="Achsel T."/>
            <person name="Luehrmann R."/>
        </authorList>
    </citation>
    <scope>FUNCTION</scope>
    <scope>SUBCELLULAR LOCATION</scope>
</reference>
<reference key="8">
    <citation type="journal article" date="2002" name="RNA">
        <title>Purification and characterization of native spliceosomes suitable for three-dimensional structural analysis.</title>
        <authorList>
            <person name="Jurica M.S."/>
            <person name="Licklider L.J."/>
            <person name="Gygi S.P."/>
            <person name="Grigorieff N."/>
            <person name="Moore M.J."/>
        </authorList>
    </citation>
    <scope>IDENTIFICATION BY MASS SPECTROMETRY</scope>
    <scope>IDENTIFICATION IN THE SPLICEOSOMAL C COMPLEX</scope>
</reference>
<reference key="9">
    <citation type="journal article" date="2006" name="Cell">
        <title>Global, in vivo, and site-specific phosphorylation dynamics in signaling networks.</title>
        <authorList>
            <person name="Olsen J.V."/>
            <person name="Blagoev B."/>
            <person name="Gnad F."/>
            <person name="Macek B."/>
            <person name="Kumar C."/>
            <person name="Mortensen P."/>
            <person name="Mann M."/>
        </authorList>
    </citation>
    <scope>PHOSPHORYLATION [LARGE SCALE ANALYSIS] AT SER-225</scope>
    <scope>IDENTIFICATION BY MASS SPECTROMETRY [LARGE SCALE ANALYSIS]</scope>
    <source>
        <tissue>Cervix carcinoma</tissue>
    </source>
</reference>
<reference key="10">
    <citation type="journal article" date="2008" name="J. Proteome Res.">
        <title>Phosphorylation analysis of primary human T lymphocytes using sequential IMAC and titanium oxide enrichment.</title>
        <authorList>
            <person name="Carrascal M."/>
            <person name="Ovelleiro D."/>
            <person name="Casas V."/>
            <person name="Gay M."/>
            <person name="Abian J."/>
        </authorList>
    </citation>
    <scope>PHOSPHORYLATION [LARGE SCALE ANALYSIS] AT SER-225</scope>
    <scope>IDENTIFICATION BY MASS SPECTROMETRY [LARGE SCALE ANALYSIS]</scope>
    <source>
        <tissue>T-cell</tissue>
    </source>
</reference>
<reference key="11">
    <citation type="journal article" date="2008" name="Mol. Cell">
        <title>Kinase-selective enrichment enables quantitative phosphoproteomics of the kinome across the cell cycle.</title>
        <authorList>
            <person name="Daub H."/>
            <person name="Olsen J.V."/>
            <person name="Bairlein M."/>
            <person name="Gnad F."/>
            <person name="Oppermann F.S."/>
            <person name="Korner R."/>
            <person name="Greff Z."/>
            <person name="Keri G."/>
            <person name="Stemmann O."/>
            <person name="Mann M."/>
        </authorList>
    </citation>
    <scope>PHOSPHORYLATION [LARGE SCALE ANALYSIS] AT SER-225</scope>
    <scope>IDENTIFICATION BY MASS SPECTROMETRY [LARGE SCALE ANALYSIS]</scope>
    <source>
        <tissue>Cervix carcinoma</tissue>
    </source>
</reference>
<reference key="12">
    <citation type="journal article" date="2008" name="Proc. Natl. Acad. Sci. U.S.A.">
        <title>A quantitative atlas of mitotic phosphorylation.</title>
        <authorList>
            <person name="Dephoure N."/>
            <person name="Zhou C."/>
            <person name="Villen J."/>
            <person name="Beausoleil S.A."/>
            <person name="Bakalarski C.E."/>
            <person name="Elledge S.J."/>
            <person name="Gygi S.P."/>
        </authorList>
    </citation>
    <scope>PHOSPHORYLATION [LARGE SCALE ANALYSIS] AT SER-26; THR-2131; SER-2133 AND SER-2135</scope>
    <scope>IDENTIFICATION BY MASS SPECTROMETRY [LARGE SCALE ANALYSIS]</scope>
    <source>
        <tissue>Cervix carcinoma</tissue>
    </source>
</reference>
<reference key="13">
    <citation type="journal article" date="2008" name="Proteomics">
        <title>Large-scale phosphoproteome analysis of human liver tissue by enrichment and fractionation of phosphopeptides with strong anion exchange chromatography.</title>
        <authorList>
            <person name="Han G."/>
            <person name="Ye M."/>
            <person name="Zhou H."/>
            <person name="Jiang X."/>
            <person name="Feng S."/>
            <person name="Jiang X."/>
            <person name="Tian R."/>
            <person name="Wan D."/>
            <person name="Zou H."/>
            <person name="Gu J."/>
        </authorList>
    </citation>
    <scope>PHOSPHORYLATION [LARGE SCALE ANALYSIS] AT SER-225</scope>
    <scope>IDENTIFICATION BY MASS SPECTROMETRY [LARGE SCALE ANALYSIS]</scope>
    <source>
        <tissue>Liver</tissue>
    </source>
</reference>
<reference key="14">
    <citation type="journal article" date="2009" name="Anal. Chem.">
        <title>Lys-N and trypsin cover complementary parts of the phosphoproteome in a refined SCX-based approach.</title>
        <authorList>
            <person name="Gauci S."/>
            <person name="Helbig A.O."/>
            <person name="Slijper M."/>
            <person name="Krijgsveld J."/>
            <person name="Heck A.J."/>
            <person name="Mohammed S."/>
        </authorList>
    </citation>
    <scope>IDENTIFICATION BY MASS SPECTROMETRY [LARGE SCALE ANALYSIS]</scope>
</reference>
<reference key="15">
    <citation type="journal article" date="2009" name="Sci. Signal.">
        <title>Quantitative phosphoproteomic analysis of T cell receptor signaling reveals system-wide modulation of protein-protein interactions.</title>
        <authorList>
            <person name="Mayya V."/>
            <person name="Lundgren D.H."/>
            <person name="Hwang S.-I."/>
            <person name="Rezaul K."/>
            <person name="Wu L."/>
            <person name="Eng J.K."/>
            <person name="Rodionov V."/>
            <person name="Han D.K."/>
        </authorList>
    </citation>
    <scope>PHOSPHORYLATION [LARGE SCALE ANALYSIS] AT THR-2131; SER-2133 AND SER-2135</scope>
    <scope>IDENTIFICATION BY MASS SPECTROMETRY [LARGE SCALE ANALYSIS]</scope>
    <source>
        <tissue>Leukemic T-cell</tissue>
    </source>
</reference>
<reference key="16">
    <citation type="journal article" date="2009" name="Science">
        <title>Lysine acetylation targets protein complexes and co-regulates major cellular functions.</title>
        <authorList>
            <person name="Choudhary C."/>
            <person name="Kumar C."/>
            <person name="Gnad F."/>
            <person name="Nielsen M.L."/>
            <person name="Rehman M."/>
            <person name="Walther T.C."/>
            <person name="Olsen J.V."/>
            <person name="Mann M."/>
        </authorList>
    </citation>
    <scope>ACETYLATION [LARGE SCALE ANALYSIS] AT LYS-971</scope>
    <scope>IDENTIFICATION BY MASS SPECTROMETRY [LARGE SCALE ANALYSIS]</scope>
</reference>
<reference key="17">
    <citation type="journal article" date="2010" name="Sci. Signal.">
        <title>Quantitative phosphoproteomics reveals widespread full phosphorylation site occupancy during mitosis.</title>
        <authorList>
            <person name="Olsen J.V."/>
            <person name="Vermeulen M."/>
            <person name="Santamaria A."/>
            <person name="Kumar C."/>
            <person name="Miller M.L."/>
            <person name="Jensen L.J."/>
            <person name="Gnad F."/>
            <person name="Cox J."/>
            <person name="Jensen T.S."/>
            <person name="Nigg E.A."/>
            <person name="Brunak S."/>
            <person name="Mann M."/>
        </authorList>
    </citation>
    <scope>PHOSPHORYLATION [LARGE SCALE ANALYSIS] AT SER-26 AND SER-225</scope>
    <scope>IDENTIFICATION BY MASS SPECTROMETRY [LARGE SCALE ANALYSIS]</scope>
    <source>
        <tissue>Cervix carcinoma</tissue>
    </source>
</reference>
<reference key="18">
    <citation type="journal article" date="2011" name="BMC Syst. Biol.">
        <title>Initial characterization of the human central proteome.</title>
        <authorList>
            <person name="Burkard T.R."/>
            <person name="Planyavsky M."/>
            <person name="Kaupe I."/>
            <person name="Breitwieser F.P."/>
            <person name="Buerckstuemmer T."/>
            <person name="Bennett K.L."/>
            <person name="Superti-Furga G."/>
            <person name="Colinge J."/>
        </authorList>
    </citation>
    <scope>IDENTIFICATION BY MASS SPECTROMETRY [LARGE SCALE ANALYSIS]</scope>
</reference>
<reference key="19">
    <citation type="journal article" date="2011" name="Sci. Signal.">
        <title>System-wide temporal characterization of the proteome and phosphoproteome of human embryonic stem cell differentiation.</title>
        <authorList>
            <person name="Rigbolt K.T."/>
            <person name="Prokhorova T.A."/>
            <person name="Akimov V."/>
            <person name="Henningsen J."/>
            <person name="Johansen P.T."/>
            <person name="Kratchmarova I."/>
            <person name="Kassem M."/>
            <person name="Mann M."/>
            <person name="Olsen J.V."/>
            <person name="Blagoev B."/>
        </authorList>
    </citation>
    <scope>PHOSPHORYLATION [LARGE SCALE ANALYSIS] AT SER-225</scope>
    <scope>IDENTIFICATION BY MASS SPECTROMETRY [LARGE SCALE ANALYSIS]</scope>
</reference>
<reference key="20">
    <citation type="journal article" date="2013" name="J. Proteome Res.">
        <title>Toward a comprehensive characterization of a human cancer cell phosphoproteome.</title>
        <authorList>
            <person name="Zhou H."/>
            <person name="Di Palma S."/>
            <person name="Preisinger C."/>
            <person name="Peng M."/>
            <person name="Polat A.N."/>
            <person name="Heck A.J."/>
            <person name="Mohammed S."/>
        </authorList>
    </citation>
    <scope>PHOSPHORYLATION [LARGE SCALE ANALYSIS] AT SER-17; SER-26; SER-225; THR-389; THR-1428 AND SER-2002</scope>
    <scope>IDENTIFICATION BY MASS SPECTROMETRY [LARGE SCALE ANALYSIS]</scope>
    <source>
        <tissue>Cervix carcinoma</tissue>
        <tissue>Erythroleukemia</tissue>
    </source>
</reference>
<reference key="21">
    <citation type="journal article" date="2014" name="J. Proteomics">
        <title>An enzyme assisted RP-RPLC approach for in-depth analysis of human liver phosphoproteome.</title>
        <authorList>
            <person name="Bian Y."/>
            <person name="Song C."/>
            <person name="Cheng K."/>
            <person name="Dong M."/>
            <person name="Wang F."/>
            <person name="Huang J."/>
            <person name="Sun D."/>
            <person name="Wang L."/>
            <person name="Ye M."/>
            <person name="Zou H."/>
        </authorList>
    </citation>
    <scope>PHOSPHORYLATION [LARGE SCALE ANALYSIS] AT SER-17 AND SER-225</scope>
    <scope>IDENTIFICATION BY MASS SPECTROMETRY [LARGE SCALE ANALYSIS]</scope>
    <source>
        <tissue>Liver</tissue>
    </source>
</reference>
<reference key="22">
    <citation type="journal article" date="2017" name="Nat. Struct. Mol. Biol.">
        <title>Site-specific mapping of the human SUMO proteome reveals co-modification with phosphorylation.</title>
        <authorList>
            <person name="Hendriks I.A."/>
            <person name="Lyon D."/>
            <person name="Young C."/>
            <person name="Jensen L.J."/>
            <person name="Vertegaal A.C."/>
            <person name="Nielsen M.L."/>
        </authorList>
    </citation>
    <scope>SUMOYLATION [LARGE SCALE ANALYSIS] AT LYS-46</scope>
    <scope>IDENTIFICATION BY MASS SPECTROMETRY [LARGE SCALE ANALYSIS]</scope>
</reference>
<reference key="23">
    <citation type="submission" date="2009-02" db="PDB data bank">
        <title>Crystal structure of Q9P172/SEC63 from Homo sapiens.</title>
        <authorList>
            <consortium name="Northeast structural genomics consortium (NESG)"/>
        </authorList>
    </citation>
    <scope>X-RAY CRYSTALLOGRAPHY (2.0 ANGSTROMS) OF 1808-2136</scope>
</reference>
<reference key="24">
    <citation type="journal article" date="2012" name="Proc. Natl. Acad. Sci. U.S.A.">
        <title>Structural basis for functional cooperation between tandem helicase cassettes in Brr2-mediated remodeling of the spliceosome.</title>
        <authorList>
            <person name="Santos K.F."/>
            <person name="Jovin S.M."/>
            <person name="Weber G."/>
            <person name="Pena V."/>
            <person name="Luhrmann R."/>
            <person name="Wahl M.C."/>
        </authorList>
    </citation>
    <scope>X-RAY CRYSTALLOGRAPHY (2.66 ANGSTROMS) OF 402-2125 IN COMPLEX WITH ATP</scope>
    <scope>CATALYTIC ACTIVITY</scope>
    <scope>FUNCTION</scope>
    <scope>DOMAIN</scope>
    <scope>CHARACTERIZATION OF VARIANT RP33 LEU-1087</scope>
    <scope>MUTAGENESIS OF ARG-603; ARG-637; LYS-1544; HIS-1548 AND THR-1578</scope>
</reference>
<reference evidence="35" key="25">
    <citation type="journal article" date="2016" name="Science">
        <title>Molecular architecture of the human U4/U6.U5 tri-snRNP.</title>
        <authorList>
            <person name="Agafonov D.E."/>
            <person name="Kastner B."/>
            <person name="Dybkov O."/>
            <person name="Hofele R.V."/>
            <person name="Liu W.T."/>
            <person name="Urlaub H."/>
            <person name="Luhrmann R."/>
            <person name="Stark H."/>
        </authorList>
    </citation>
    <scope>STRUCTURE BY ELECTRON MICROSCOPY (7.00 ANGSTROMS)</scope>
    <scope>SUBUNIT</scope>
    <scope>IDENTIFICATION BY MASS SPECTROMETRY</scope>
</reference>
<reference evidence="38" key="26">
    <citation type="journal article" date="2017" name="Cell">
        <title>An Atomic Structure of the Human Spliceosome.</title>
        <authorList>
            <person name="Zhang X."/>
            <person name="Yan C."/>
            <person name="Hang J."/>
            <person name="Finci L.I."/>
            <person name="Lei J."/>
            <person name="Shi Y."/>
        </authorList>
    </citation>
    <scope>STRUCTURE BY ELECTRON MICROSCOPY (3.60 ANGSTROMS)</scope>
    <scope>FUNCTION</scope>
    <scope>SUBCELLULAR LOCATION</scope>
    <scope>SUBUNIT</scope>
</reference>
<reference evidence="37" key="27">
    <citation type="journal article" date="2017" name="Cell">
        <title>Cryo-EM Structure of a Pre-catalytic Human Spliceosome Primed for Activation.</title>
        <authorList>
            <person name="Bertram K."/>
            <person name="Agafonov D.E."/>
            <person name="Dybkov O."/>
            <person name="Haselbach D."/>
            <person name="Leelaram M.N."/>
            <person name="Will C.L."/>
            <person name="Urlaub H."/>
            <person name="Kastner B."/>
            <person name="Luhrmann R."/>
            <person name="Stark H."/>
        </authorList>
    </citation>
    <scope>STRUCTURE BY ELECTRON MICROSCOPY (4.50 ANGSTROMS)</scope>
    <scope>FUNCTION</scope>
    <scope>SUBCELLULAR LOCATION</scope>
    <scope>SUBUNIT</scope>
</reference>
<reference evidence="44" key="28">
    <citation type="journal article" date="2018" name="Cell">
        <title>Structure and Conformational Dynamics of the Human Spliceosomal Bact Complex.</title>
        <authorList>
            <person name="Haselbach D."/>
            <person name="Komarov I."/>
            <person name="Agafonov D.E."/>
            <person name="Hartmuth K."/>
            <person name="Graf B."/>
            <person name="Dybkov O."/>
            <person name="Urlaub H."/>
            <person name="Kastner B."/>
            <person name="Luhrmann R."/>
            <person name="Stark H."/>
        </authorList>
    </citation>
    <scope>STRUCTURE BY ELECTRON MICROSCOPY (4.50 ANGSTROMS)</scope>
    <scope>FUNCTION</scope>
    <scope>SUBCELLULAR LOCATION</scope>
    <scope>SUBUNIT</scope>
</reference>
<reference evidence="43" key="29">
    <citation type="journal article" date="2018" name="Cell Res.">
        <title>Structures of the human pre-catalytic spliceosome and its precursor spliceosome.</title>
        <authorList>
            <person name="Zhan X."/>
            <person name="Yan C."/>
            <person name="Zhang X."/>
            <person name="Lei J."/>
            <person name="Shi Y."/>
        </authorList>
    </citation>
    <scope>STRUCTURE BY ELECTRON MICROSCOPY (5.70 ANGSTROMS)</scope>
    <scope>FUNCTION</scope>
    <scope>SUBCELLULAR LOCATION</scope>
    <scope>SUBUNIT</scope>
</reference>
<reference evidence="40 41 42" key="30">
    <citation type="journal article" date="2018" name="Cell Res.">
        <title>Structure of the human activated spliceosome in three conformational states.</title>
        <authorList>
            <person name="Zhang X."/>
            <person name="Yan C."/>
            <person name="Zhan X."/>
            <person name="Li L."/>
            <person name="Lei J."/>
            <person name="Shi Y."/>
        </authorList>
    </citation>
    <scope>STRUCTURE BY ELECTRON MICROSCOPY (4.90 ANGSTROMS)</scope>
    <scope>FUNCTION</scope>
    <scope>SUBCELLULAR LOCATION</scope>
    <scope>SUBUNIT</scope>
</reference>
<reference evidence="39" key="31">
    <citation type="journal article" date="2018" name="Science">
        <title>Structure of a human catalytic step I spliceosome.</title>
        <authorList>
            <person name="Zhan X."/>
            <person name="Yan C."/>
            <person name="Zhang X."/>
            <person name="Lei J."/>
            <person name="Shi Y."/>
        </authorList>
    </citation>
    <scope>STRUCTURE BY ELECTRON MICROSCOPY (4.10 ANGSTROMS)</scope>
    <scope>FUNCTION</scope>
    <scope>SUBCELLULAR LOCATION</scope>
    <scope>SUBUNIT</scope>
</reference>
<reference evidence="45" key="32">
    <citation type="journal article" date="2019" name="Cell Res.">
        <title>Structures of the human spliceosomes before and after release of the ligated exon.</title>
        <authorList>
            <person name="Zhang X."/>
            <person name="Zhan X."/>
            <person name="Yan C."/>
            <person name="Zhang W."/>
            <person name="Liu D."/>
            <person name="Lei J."/>
            <person name="Shi Y."/>
        </authorList>
    </citation>
    <scope>STRUCTURE BY ELECTRON MICROSCOPY (3.00 ANGSTROMS)</scope>
    <scope>FUNCTION</scope>
    <scope>SUBCELLULAR LOCATION</scope>
    <scope>SUBUNIT</scope>
</reference>
<reference evidence="46" key="33">
    <citation type="journal article" date="2019" name="Science">
        <title>A human postcatalytic spliceosome structure reveals essential roles of metazoan factors for exon ligation.</title>
        <authorList>
            <person name="Fica S.M."/>
            <person name="Oubridge C."/>
            <person name="Wilkinson M.E."/>
            <person name="Newman A.J."/>
            <person name="Nagai K."/>
        </authorList>
    </citation>
    <scope>STRUCTURE BY ELECTRON MICROSCOPY (3.30 ANGSTROMS) OF 404-2125</scope>
    <scope>FUNCTION</scope>
    <scope>SUBCELLULAR LOCATION</scope>
    <scope>SUBUNIT</scope>
</reference>
<reference evidence="47" key="34">
    <citation type="journal article" date="2021" name="Science">
        <title>Structure of the activated human minor spliceosome.</title>
        <authorList>
            <person name="Bai R."/>
            <person name="Wan R."/>
            <person name="Wang L."/>
            <person name="Xu K."/>
            <person name="Zhang Q."/>
            <person name="Lei J."/>
            <person name="Shi Y."/>
        </authorList>
    </citation>
    <scope>STRUCTURE BY ELECTRON MICROSCOPY (2.89 ANGSTROMS)</scope>
    <scope>FUNCTION</scope>
    <scope>SUBUNIT</scope>
</reference>
<reference evidence="48 49" key="35">
    <citation type="journal article" date="2022" name="Nat. Commun.">
        <title>A multi-factor trafficking site on the spliceosome remodeling enzyme BRR2 recruits C9ORF78 to regulate alternative splicing.</title>
        <authorList>
            <person name="Bergfort A."/>
            <person name="Preussner M."/>
            <person name="Kuropka B."/>
            <person name="Ilik I.A."/>
            <person name="Hilal T."/>
            <person name="Weber G."/>
            <person name="Freund C."/>
            <person name="Aktas T."/>
            <person name="Heyd F."/>
            <person name="Wahl M.C."/>
        </authorList>
    </citation>
    <scope>STRUCTURE BY ELECTRON MICROSCOPY (2.76 ANGSTROMS) OF 395-2129 IN COMPLEX WITH WBP4; PRPF8 AND C9ORF78</scope>
    <scope>FUNCTION</scope>
    <scope>CATALYTIC ACTIVITY</scope>
    <scope>INTERACTION WITH C9ORF78; PRPF8 AND WBP4</scope>
</reference>
<reference evidence="50" key="36">
    <citation type="journal article" date="2022" name="Nucleic Acids Res.">
        <title>The intrinsically disordered TSSC4 protein acts as a helicase inhibitor, placeholder and multi-interaction coordinator during snRNP assembly and recycling.</title>
        <authorList>
            <person name="Bergfort A."/>
            <person name="Hilal T."/>
            <person name="Kuropka B."/>
            <person name="Ilik I.A."/>
            <person name="Weber G."/>
            <person name="Aktas T."/>
            <person name="Freund C."/>
            <person name="Wahl M.C."/>
        </authorList>
    </citation>
    <scope>STRUCTURE BY ELECTRON MICROSCOPY (3.05 ANGSTROMS) OF 394-2136 IN COMPLEX WITH C9ORF78; PRPF8; TSSC4 AND WBP4</scope>
    <scope>INTERACTION WITH TSSC4</scope>
    <scope>REGION</scope>
</reference>
<reference key="37">
    <citation type="journal article" date="2006" name="Science">
        <title>The consensus coding sequences of human breast and colorectal cancers.</title>
        <authorList>
            <person name="Sjoeblom T."/>
            <person name="Jones S."/>
            <person name="Wood L.D."/>
            <person name="Parsons D.W."/>
            <person name="Lin J."/>
            <person name="Barber T.D."/>
            <person name="Mandelker D."/>
            <person name="Leary R.J."/>
            <person name="Ptak J."/>
            <person name="Silliman N."/>
            <person name="Szabo S."/>
            <person name="Buckhaults P."/>
            <person name="Farrell C."/>
            <person name="Meeh P."/>
            <person name="Markowitz S.D."/>
            <person name="Willis J."/>
            <person name="Dawson D."/>
            <person name="Willson J.K.V."/>
            <person name="Gazdar A.F."/>
            <person name="Hartigan J."/>
            <person name="Wu L."/>
            <person name="Liu C."/>
            <person name="Parmigiani G."/>
            <person name="Park B.H."/>
            <person name="Bachman K.E."/>
            <person name="Papadopoulos N."/>
            <person name="Vogelstein B."/>
            <person name="Kinzler K.W."/>
            <person name="Velculescu V.E."/>
        </authorList>
    </citation>
    <scope>VARIANT [LARGE SCALE ANALYSIS] LEU-1736</scope>
</reference>
<reference key="38">
    <citation type="journal article" date="2009" name="Am. J. Hum. Genet.">
        <title>Autosomal-dominant retinitis pigmentosa caused by a mutation in SNRNP200, a gene required for unwinding of U4/U6 snRNAs.</title>
        <authorList>
            <person name="Zhao C."/>
            <person name="Bellur D.L."/>
            <person name="Lu S."/>
            <person name="Zhao F."/>
            <person name="Grassi M.A."/>
            <person name="Bowne S.J."/>
            <person name="Sullivan L.S."/>
            <person name="Daiger S.P."/>
            <person name="Chen L.J."/>
            <person name="Pang C.P."/>
            <person name="Zhao K."/>
            <person name="Staley J.P."/>
            <person name="Larsson C."/>
        </authorList>
    </citation>
    <scope>VARIANT RP33 LEU-1087</scope>
    <scope>TISSUE SPECIFICITY</scope>
</reference>
<reference key="39">
    <citation type="journal article" date="2010" name="Invest. Ophthalmol. Vis. Sci.">
        <title>Mutations in ASCC3L1 on 2q11.2 are associated with autosomal dominant retinitis pigmentosa in a Chinese family.</title>
        <authorList>
            <person name="Li N."/>
            <person name="Mei H."/>
            <person name="MacDonald I.M."/>
            <person name="Jiao X."/>
            <person name="Hejtmancik J.F."/>
        </authorList>
    </citation>
    <scope>VARIANT RP33 LEU-1090</scope>
</reference>
<reference key="40">
    <citation type="journal article" date="2011" name="Hum. Mutat.">
        <title>Next generation sequencing of pooled samples reveals new SNRNP200 mutations associated with retinitis pigmentosa.</title>
        <authorList>
            <person name="Benaglio P."/>
            <person name="McGee T.L."/>
            <person name="Capelli L.P."/>
            <person name="Harper S."/>
            <person name="Berson E.L."/>
            <person name="Rivolta C."/>
        </authorList>
    </citation>
    <scope>VARIANTS RP33 CYS-681; HIS-681; LEU-683; CYS-689 AND LEU-1087</scope>
</reference>
<reference key="41">
    <citation type="journal article" date="2012" name="PLoS ONE">
        <title>A novel missense SNRNP200 mutation associated with autosomal dominant retinitis pigmentosa in a Chinese family.</title>
        <authorList>
            <person name="Liu T."/>
            <person name="Jin X."/>
            <person name="Zhang X."/>
            <person name="Yuan H."/>
            <person name="Cheng J."/>
            <person name="Lee J."/>
            <person name="Zhang B."/>
            <person name="Zhang M."/>
            <person name="Wu J."/>
            <person name="Wang L."/>
            <person name="Tian G."/>
            <person name="Wang W."/>
        </authorList>
    </citation>
    <scope>VARIANT RP33 GLU-885</scope>
</reference>
<reference key="42">
    <citation type="journal article" date="2013" name="Eye">
        <title>Contribution of SNRNP200 sequence variations to retinitis pigmentosa.</title>
        <authorList>
            <person name="Zhang X."/>
            <person name="Lai T.Y."/>
            <person name="Chiang S.W."/>
            <person name="Tam P.O."/>
            <person name="Liu D.T."/>
            <person name="Chan C.K."/>
            <person name="Pang C.P."/>
            <person name="Zhao C."/>
            <person name="Chen L.J."/>
        </authorList>
    </citation>
    <scope>VARIANTS RP33 ARG-502; VAL-698 AND HIS-1779</scope>
    <scope>VARIANT THR-1995</scope>
</reference>
<reference key="43">
    <citation type="journal article" date="2013" name="Mol. Vis.">
        <title>Mutations in the small nuclear riboprotein 200 kDa gene (SNRNP200) cause 1.6% of autosomal dominant retinitis pigmentosa.</title>
        <authorList>
            <person name="Bowne S.J."/>
            <person name="Sullivan L.S."/>
            <person name="Avery C.E."/>
            <person name="Sasser E.M."/>
            <person name="Roorda A."/>
            <person name="Duncan J.L."/>
            <person name="Wheaton D.H."/>
            <person name="Birch D.G."/>
            <person name="Branham K.E."/>
            <person name="Heckenlively J.R."/>
            <person name="Sieving P.A."/>
            <person name="Daiger S.P."/>
        </authorList>
    </citation>
    <scope>VARIANTS RP33 VAL-542; CYS-681; HIS-681; SER-682 AND LEU-1087</scope>
</reference>